<gene>
    <name type="primary">UBR5</name>
    <name evidence="31" type="synonym">EDD</name>
    <name type="synonym">EDD1</name>
    <name evidence="33" type="synonym">HYD</name>
    <name evidence="32" type="synonym">KIAA0896</name>
</gene>
<name>UBR5_HUMAN</name>
<protein>
    <recommendedName>
        <fullName evidence="34">E3 ubiquitin-protein ligase UBR5</fullName>
        <ecNumber evidence="18 21 22 24 26 28 30">2.3.2.26</ecNumber>
    </recommendedName>
    <alternativeName>
        <fullName>E3 ubiquitin-protein ligase, HECT domain-containing 1</fullName>
    </alternativeName>
    <alternativeName>
        <fullName evidence="33">Hyperplastic discs protein homolog</fullName>
        <shortName evidence="33">hHYD</shortName>
    </alternativeName>
    <alternativeName>
        <fullName>Progestin-induced protein</fullName>
    </alternativeName>
</protein>
<evidence type="ECO:0000250" key="1">
    <source>
        <dbReference type="UniProtKB" id="Q80TP3"/>
    </source>
</evidence>
<evidence type="ECO:0000255" key="2">
    <source>
        <dbReference type="PROSITE-ProRule" id="PRU00104"/>
    </source>
</evidence>
<evidence type="ECO:0000255" key="3">
    <source>
        <dbReference type="PROSITE-ProRule" id="PRU00212"/>
    </source>
</evidence>
<evidence type="ECO:0000255" key="4">
    <source>
        <dbReference type="PROSITE-ProRule" id="PRU00508"/>
    </source>
</evidence>
<evidence type="ECO:0000255" key="5">
    <source>
        <dbReference type="PROSITE-ProRule" id="PRU00641"/>
    </source>
</evidence>
<evidence type="ECO:0000256" key="6">
    <source>
        <dbReference type="SAM" id="MobiDB-lite"/>
    </source>
</evidence>
<evidence type="ECO:0000269" key="7">
    <source>
    </source>
</evidence>
<evidence type="ECO:0000269" key="8">
    <source>
    </source>
</evidence>
<evidence type="ECO:0000269" key="9">
    <source>
    </source>
</evidence>
<evidence type="ECO:0000269" key="10">
    <source>
    </source>
</evidence>
<evidence type="ECO:0000269" key="11">
    <source>
    </source>
</evidence>
<evidence type="ECO:0000269" key="12">
    <source>
    </source>
</evidence>
<evidence type="ECO:0000269" key="13">
    <source>
    </source>
</evidence>
<evidence type="ECO:0000269" key="14">
    <source>
    </source>
</evidence>
<evidence type="ECO:0000269" key="15">
    <source>
    </source>
</evidence>
<evidence type="ECO:0000269" key="16">
    <source>
    </source>
</evidence>
<evidence type="ECO:0000269" key="17">
    <source>
    </source>
</evidence>
<evidence type="ECO:0000269" key="18">
    <source>
    </source>
</evidence>
<evidence type="ECO:0000269" key="19">
    <source>
    </source>
</evidence>
<evidence type="ECO:0000269" key="20">
    <source>
    </source>
</evidence>
<evidence type="ECO:0000269" key="21">
    <source>
    </source>
</evidence>
<evidence type="ECO:0000269" key="22">
    <source>
    </source>
</evidence>
<evidence type="ECO:0000269" key="23">
    <source>
    </source>
</evidence>
<evidence type="ECO:0000269" key="24">
    <source>
    </source>
</evidence>
<evidence type="ECO:0000269" key="25">
    <source>
    </source>
</evidence>
<evidence type="ECO:0000269" key="26">
    <source>
    </source>
</evidence>
<evidence type="ECO:0000269" key="27">
    <source>
    </source>
</evidence>
<evidence type="ECO:0000269" key="28">
    <source>
    </source>
</evidence>
<evidence type="ECO:0000269" key="29">
    <source>
    </source>
</evidence>
<evidence type="ECO:0000269" key="30">
    <source>
    </source>
</evidence>
<evidence type="ECO:0000303" key="31">
    <source>
    </source>
</evidence>
<evidence type="ECO:0000303" key="32">
    <source>
    </source>
</evidence>
<evidence type="ECO:0000303" key="33">
    <source>
    </source>
</evidence>
<evidence type="ECO:0000305" key="34"/>
<evidence type="ECO:0000305" key="35">
    <source>
    </source>
</evidence>
<evidence type="ECO:0000305" key="36">
    <source>
    </source>
</evidence>
<evidence type="ECO:0000305" key="37">
    <source>
    </source>
</evidence>
<evidence type="ECO:0000305" key="38">
    <source>
    </source>
</evidence>
<evidence type="ECO:0000305" key="39">
    <source>
    </source>
</evidence>
<evidence type="ECO:0000305" key="40">
    <source>
    </source>
</evidence>
<evidence type="ECO:0007744" key="41">
    <source>
        <dbReference type="PDB" id="2QHO"/>
    </source>
</evidence>
<evidence type="ECO:0007744" key="42">
    <source>
        <dbReference type="PDB" id="3PT3"/>
    </source>
</evidence>
<evidence type="ECO:0007744" key="43">
    <source>
        <dbReference type="PDB" id="8BJA"/>
    </source>
</evidence>
<evidence type="ECO:0007744" key="44">
    <source>
        <dbReference type="PDB" id="8C06"/>
    </source>
</evidence>
<evidence type="ECO:0007744" key="45">
    <source>
        <dbReference type="PDB" id="8C07"/>
    </source>
</evidence>
<evidence type="ECO:0007744" key="46">
    <source>
        <dbReference type="PDB" id="8D4X"/>
    </source>
</evidence>
<evidence type="ECO:0007744" key="47">
    <source>
        <dbReference type="PDB" id="8E0Q"/>
    </source>
</evidence>
<evidence type="ECO:0007744" key="48">
    <source>
        <dbReference type="PDB" id="8EWI"/>
    </source>
</evidence>
<evidence type="ECO:0007744" key="49">
    <source>
        <dbReference type="PDB" id="8P82"/>
    </source>
</evidence>
<evidence type="ECO:0007744" key="50">
    <source>
        <dbReference type="PDB" id="8P83"/>
    </source>
</evidence>
<evidence type="ECO:0007744" key="51">
    <source>
    </source>
</evidence>
<evidence type="ECO:0007744" key="52">
    <source>
    </source>
</evidence>
<evidence type="ECO:0007744" key="53">
    <source>
    </source>
</evidence>
<evidence type="ECO:0007744" key="54">
    <source>
    </source>
</evidence>
<evidence type="ECO:0007744" key="55">
    <source>
    </source>
</evidence>
<evidence type="ECO:0007744" key="56">
    <source>
    </source>
</evidence>
<evidence type="ECO:0007744" key="57">
    <source>
    </source>
</evidence>
<evidence type="ECO:0007744" key="58">
    <source>
    </source>
</evidence>
<evidence type="ECO:0007744" key="59">
    <source>
    </source>
</evidence>
<evidence type="ECO:0007829" key="60">
    <source>
        <dbReference type="PDB" id="1I2T"/>
    </source>
</evidence>
<evidence type="ECO:0007829" key="61">
    <source>
        <dbReference type="PDB" id="2QHO"/>
    </source>
</evidence>
<evidence type="ECO:0007829" key="62">
    <source>
        <dbReference type="PDB" id="3PT3"/>
    </source>
</evidence>
<evidence type="ECO:0007829" key="63">
    <source>
        <dbReference type="PDB" id="8BJA"/>
    </source>
</evidence>
<evidence type="ECO:0007829" key="64">
    <source>
        <dbReference type="PDB" id="8C06"/>
    </source>
</evidence>
<evidence type="ECO:0007829" key="65">
    <source>
        <dbReference type="PDB" id="8D4X"/>
    </source>
</evidence>
<evidence type="ECO:0007829" key="66">
    <source>
        <dbReference type="PDB" id="8E0Q"/>
    </source>
</evidence>
<evidence type="ECO:0007829" key="67">
    <source>
        <dbReference type="PDB" id="8EWI"/>
    </source>
</evidence>
<evidence type="ECO:0007829" key="68">
    <source>
        <dbReference type="PDB" id="8P82"/>
    </source>
</evidence>
<dbReference type="EC" id="2.3.2.26" evidence="18 21 22 24 26 28 30"/>
<dbReference type="EMBL" id="AF006010">
    <property type="protein sequence ID" value="AAD01259.2"/>
    <property type="molecule type" value="mRNA"/>
</dbReference>
<dbReference type="EMBL" id="U95000">
    <property type="protein sequence ID" value="AAF88143.1"/>
    <property type="molecule type" value="mRNA"/>
</dbReference>
<dbReference type="EMBL" id="AB020703">
    <property type="protein sequence ID" value="BAA74919.3"/>
    <property type="status" value="ALT_INIT"/>
    <property type="molecule type" value="mRNA"/>
</dbReference>
<dbReference type="EMBL" id="AP002907">
    <property type="status" value="NOT_ANNOTATED_CDS"/>
    <property type="molecule type" value="Genomic_DNA"/>
</dbReference>
<dbReference type="EMBL" id="AP002981">
    <property type="status" value="NOT_ANNOTATED_CDS"/>
    <property type="molecule type" value="Genomic_DNA"/>
</dbReference>
<dbReference type="EMBL" id="BC137234">
    <property type="protein sequence ID" value="AAI37235.1"/>
    <property type="molecule type" value="mRNA"/>
</dbReference>
<dbReference type="CCDS" id="CCDS34933.1">
    <molecule id="O95071-1"/>
</dbReference>
<dbReference type="CCDS" id="CCDS64946.1">
    <molecule id="O95071-2"/>
</dbReference>
<dbReference type="RefSeq" id="NP_001269802.1">
    <molecule id="O95071-2"/>
    <property type="nucleotide sequence ID" value="NM_001282873.2"/>
</dbReference>
<dbReference type="RefSeq" id="NP_056986.2">
    <molecule id="O95071-1"/>
    <property type="nucleotide sequence ID" value="NM_015902.5"/>
</dbReference>
<dbReference type="PDB" id="1I2T">
    <property type="method" value="X-ray"/>
    <property type="resolution" value="1.04 A"/>
    <property type="chains" value="A=2393-2453"/>
</dbReference>
<dbReference type="PDB" id="2QHO">
    <property type="method" value="X-ray"/>
    <property type="resolution" value="1.85 A"/>
    <property type="chains" value="B/D/F/H=180-230"/>
</dbReference>
<dbReference type="PDB" id="3PT3">
    <property type="method" value="X-ray"/>
    <property type="resolution" value="1.97 A"/>
    <property type="chains" value="A/B=2687-2799"/>
</dbReference>
<dbReference type="PDB" id="8BJA">
    <property type="method" value="EM"/>
    <property type="resolution" value="3.00 A"/>
    <property type="chains" value="A/B=1-2798"/>
</dbReference>
<dbReference type="PDB" id="8C06">
    <property type="method" value="EM"/>
    <property type="resolution" value="2.70 A"/>
    <property type="chains" value="A/B/D/E/F/G=1-2799"/>
</dbReference>
<dbReference type="PDB" id="8C07">
    <property type="method" value="EM"/>
    <property type="resolution" value="3.30 A"/>
    <property type="chains" value="B/J=1-2799"/>
</dbReference>
<dbReference type="PDB" id="8D4X">
    <property type="method" value="EM"/>
    <property type="resolution" value="2.80 A"/>
    <property type="chains" value="A/B=1-2799"/>
</dbReference>
<dbReference type="PDB" id="8E0Q">
    <property type="method" value="EM"/>
    <property type="resolution" value="2.66 A"/>
    <property type="chains" value="A/B=1-2799"/>
</dbReference>
<dbReference type="PDB" id="8EWI">
    <property type="method" value="EM"/>
    <property type="resolution" value="3.50 A"/>
    <property type="chains" value="A/B/C/D=1-2799"/>
</dbReference>
<dbReference type="PDB" id="8P82">
    <property type="method" value="EM"/>
    <property type="resolution" value="3.36 A"/>
    <property type="chains" value="A/B=1-2799"/>
</dbReference>
<dbReference type="PDB" id="8P83">
    <property type="method" value="EM"/>
    <property type="resolution" value="3.87 A"/>
    <property type="chains" value="A/B/C/D=1-2799"/>
</dbReference>
<dbReference type="PDBsum" id="1I2T"/>
<dbReference type="PDBsum" id="2QHO"/>
<dbReference type="PDBsum" id="3PT3"/>
<dbReference type="PDBsum" id="8BJA"/>
<dbReference type="PDBsum" id="8C06"/>
<dbReference type="PDBsum" id="8C07"/>
<dbReference type="PDBsum" id="8D4X"/>
<dbReference type="PDBsum" id="8E0Q"/>
<dbReference type="PDBsum" id="8EWI"/>
<dbReference type="PDBsum" id="8P82"/>
<dbReference type="PDBsum" id="8P83"/>
<dbReference type="EMDB" id="EMD-16087"/>
<dbReference type="EMDB" id="EMD-16355"/>
<dbReference type="EMDB" id="EMD-16356"/>
<dbReference type="EMDB" id="EMD-17539"/>
<dbReference type="EMDB" id="EMD-17540"/>
<dbReference type="EMDB" id="EMD-17541"/>
<dbReference type="EMDB" id="EMD-17542"/>
<dbReference type="EMDB" id="EMD-27201"/>
<dbReference type="EMDB" id="EMD-27822"/>
<dbReference type="EMDB" id="EMD-28646"/>
<dbReference type="SMR" id="O95071"/>
<dbReference type="BioGRID" id="119501">
    <property type="interactions" value="608"/>
</dbReference>
<dbReference type="CORUM" id="O95071"/>
<dbReference type="DIP" id="DIP-32930N"/>
<dbReference type="ELM" id="O95071"/>
<dbReference type="FunCoup" id="O95071">
    <property type="interactions" value="5443"/>
</dbReference>
<dbReference type="IntAct" id="O95071">
    <property type="interactions" value="195"/>
</dbReference>
<dbReference type="MINT" id="O95071"/>
<dbReference type="STRING" id="9606.ENSP00000429084"/>
<dbReference type="GlyGen" id="O95071">
    <property type="glycosylation" value="3 sites, 1 O-linked glycan (2 sites)"/>
</dbReference>
<dbReference type="iPTMnet" id="O95071"/>
<dbReference type="PhosphoSitePlus" id="O95071"/>
<dbReference type="SwissPalm" id="O95071"/>
<dbReference type="BioMuta" id="UBR5"/>
<dbReference type="jPOST" id="O95071"/>
<dbReference type="MassIVE" id="O95071"/>
<dbReference type="PaxDb" id="9606-ENSP00000429084"/>
<dbReference type="PeptideAtlas" id="O95071"/>
<dbReference type="ProteomicsDB" id="50641">
    <molecule id="O95071-1"/>
</dbReference>
<dbReference type="Pumba" id="O95071"/>
<dbReference type="Antibodypedia" id="13236">
    <property type="antibodies" value="294 antibodies from 37 providers"/>
</dbReference>
<dbReference type="DNASU" id="51366"/>
<dbReference type="Ensembl" id="ENST00000220959.8">
    <molecule id="O95071-2"/>
    <property type="protein sequence ID" value="ENSP00000220959.4"/>
    <property type="gene ID" value="ENSG00000104517.13"/>
</dbReference>
<dbReference type="Ensembl" id="ENST00000520539.6">
    <molecule id="O95071-1"/>
    <property type="protein sequence ID" value="ENSP00000429084.1"/>
    <property type="gene ID" value="ENSG00000104517.13"/>
</dbReference>
<dbReference type="GeneID" id="51366"/>
<dbReference type="KEGG" id="hsa:51366"/>
<dbReference type="MANE-Select" id="ENST00000520539.6">
    <property type="protein sequence ID" value="ENSP00000429084.1"/>
    <property type="RefSeq nucleotide sequence ID" value="NM_015902.6"/>
    <property type="RefSeq protein sequence ID" value="NP_056986.2"/>
</dbReference>
<dbReference type="UCSC" id="uc003ykr.3">
    <molecule id="O95071-1"/>
    <property type="organism name" value="human"/>
</dbReference>
<dbReference type="AGR" id="HGNC:16806"/>
<dbReference type="CTD" id="51366"/>
<dbReference type="DisGeNET" id="51366"/>
<dbReference type="GeneCards" id="UBR5"/>
<dbReference type="HGNC" id="HGNC:16806">
    <property type="gene designation" value="UBR5"/>
</dbReference>
<dbReference type="HPA" id="ENSG00000104517">
    <property type="expression patterns" value="Low tissue specificity"/>
</dbReference>
<dbReference type="MalaCards" id="UBR5"/>
<dbReference type="MIM" id="608413">
    <property type="type" value="gene"/>
</dbReference>
<dbReference type="neXtProt" id="NX_O95071"/>
<dbReference type="OpenTargets" id="ENSG00000104517"/>
<dbReference type="PharmGKB" id="PA162408175"/>
<dbReference type="VEuPathDB" id="HostDB:ENSG00000104517"/>
<dbReference type="eggNOG" id="KOG0943">
    <property type="taxonomic scope" value="Eukaryota"/>
</dbReference>
<dbReference type="GeneTree" id="ENSGT00940000156357"/>
<dbReference type="InParanoid" id="O95071"/>
<dbReference type="OMA" id="IRDPNWL"/>
<dbReference type="OrthoDB" id="298098at2759"/>
<dbReference type="PAN-GO" id="O95071">
    <property type="GO annotations" value="7 GO annotations based on evolutionary models"/>
</dbReference>
<dbReference type="PhylomeDB" id="O95071"/>
<dbReference type="TreeFam" id="TF314406"/>
<dbReference type="PathwayCommons" id="O95071"/>
<dbReference type="SignaLink" id="O95071"/>
<dbReference type="SIGNOR" id="O95071"/>
<dbReference type="UniPathway" id="UPA00143"/>
<dbReference type="BioGRID-ORCS" id="51366">
    <property type="hits" value="315 hits in 1214 CRISPR screens"/>
</dbReference>
<dbReference type="ChiTaRS" id="UBR5">
    <property type="organism name" value="human"/>
</dbReference>
<dbReference type="EvolutionaryTrace" id="O95071"/>
<dbReference type="GeneWiki" id="UBR5"/>
<dbReference type="GenomeRNAi" id="51366"/>
<dbReference type="Pharos" id="O95071">
    <property type="development level" value="Tbio"/>
</dbReference>
<dbReference type="PRO" id="PR:O95071"/>
<dbReference type="Proteomes" id="UP000005640">
    <property type="component" value="Chromosome 8"/>
</dbReference>
<dbReference type="RNAct" id="O95071">
    <property type="molecule type" value="protein"/>
</dbReference>
<dbReference type="Bgee" id="ENSG00000104517">
    <property type="expression patterns" value="Expressed in ventricular zone and 205 other cell types or tissues"/>
</dbReference>
<dbReference type="ExpressionAtlas" id="O95071">
    <property type="expression patterns" value="baseline and differential"/>
</dbReference>
<dbReference type="GO" id="GO:0000785">
    <property type="term" value="C:chromatin"/>
    <property type="evidence" value="ECO:0000314"/>
    <property type="project" value="UniProtKB"/>
</dbReference>
<dbReference type="GO" id="GO:0005737">
    <property type="term" value="C:cytoplasm"/>
    <property type="evidence" value="ECO:0000314"/>
    <property type="project" value="UniProtKB"/>
</dbReference>
<dbReference type="GO" id="GO:0005829">
    <property type="term" value="C:cytosol"/>
    <property type="evidence" value="ECO:0000314"/>
    <property type="project" value="HPA"/>
</dbReference>
<dbReference type="GO" id="GO:0016020">
    <property type="term" value="C:membrane"/>
    <property type="evidence" value="ECO:0007005"/>
    <property type="project" value="UniProtKB"/>
</dbReference>
<dbReference type="GO" id="GO:0005654">
    <property type="term" value="C:nucleoplasm"/>
    <property type="evidence" value="ECO:0000314"/>
    <property type="project" value="HPA"/>
</dbReference>
<dbReference type="GO" id="GO:0005634">
    <property type="term" value="C:nucleus"/>
    <property type="evidence" value="ECO:0000314"/>
    <property type="project" value="UniProtKB"/>
</dbReference>
<dbReference type="GO" id="GO:0048471">
    <property type="term" value="C:perinuclear region of cytoplasm"/>
    <property type="evidence" value="ECO:0000314"/>
    <property type="project" value="MGI"/>
</dbReference>
<dbReference type="GO" id="GO:0032991">
    <property type="term" value="C:protein-containing complex"/>
    <property type="evidence" value="ECO:0000314"/>
    <property type="project" value="MGI"/>
</dbReference>
<dbReference type="GO" id="GO:0003723">
    <property type="term" value="F:RNA binding"/>
    <property type="evidence" value="ECO:0007669"/>
    <property type="project" value="InterPro"/>
</dbReference>
<dbReference type="GO" id="GO:0043130">
    <property type="term" value="F:ubiquitin binding"/>
    <property type="evidence" value="ECO:0000314"/>
    <property type="project" value="UniProtKB"/>
</dbReference>
<dbReference type="GO" id="GO:0061630">
    <property type="term" value="F:ubiquitin protein ligase activity"/>
    <property type="evidence" value="ECO:0000314"/>
    <property type="project" value="UniProtKB"/>
</dbReference>
<dbReference type="GO" id="GO:0034450">
    <property type="term" value="F:ubiquitin-ubiquitin ligase activity"/>
    <property type="evidence" value="ECO:0000314"/>
    <property type="project" value="BHF-UCL"/>
</dbReference>
<dbReference type="GO" id="GO:0008270">
    <property type="term" value="F:zinc ion binding"/>
    <property type="evidence" value="ECO:0007669"/>
    <property type="project" value="UniProtKB-KW"/>
</dbReference>
<dbReference type="GO" id="GO:0140455">
    <property type="term" value="P:cytoplasm protein quality control"/>
    <property type="evidence" value="ECO:0000314"/>
    <property type="project" value="UniProtKB"/>
</dbReference>
<dbReference type="GO" id="GO:0071629">
    <property type="term" value="P:cytoplasm protein quality control by the ubiquitin-proteasome system"/>
    <property type="evidence" value="ECO:0000314"/>
    <property type="project" value="UniProtKB"/>
</dbReference>
<dbReference type="GO" id="GO:0006974">
    <property type="term" value="P:DNA damage response"/>
    <property type="evidence" value="ECO:0000314"/>
    <property type="project" value="HGNC-UCL"/>
</dbReference>
<dbReference type="GO" id="GO:0006281">
    <property type="term" value="P:DNA repair"/>
    <property type="evidence" value="ECO:0007669"/>
    <property type="project" value="UniProtKB-KW"/>
</dbReference>
<dbReference type="GO" id="GO:0140861">
    <property type="term" value="P:DNA repair-dependent chromatin remodeling"/>
    <property type="evidence" value="ECO:0000315"/>
    <property type="project" value="UniProtKB"/>
</dbReference>
<dbReference type="GO" id="GO:0033696">
    <property type="term" value="P:heterochromatin boundary formation"/>
    <property type="evidence" value="ECO:0000315"/>
    <property type="project" value="UniProtKB"/>
</dbReference>
<dbReference type="GO" id="GO:0045879">
    <property type="term" value="P:negative regulation of smoothened signaling pathway"/>
    <property type="evidence" value="ECO:0000250"/>
    <property type="project" value="UniProtKB"/>
</dbReference>
<dbReference type="GO" id="GO:0071630">
    <property type="term" value="P:nuclear protein quality control by the ubiquitin-proteasome system"/>
    <property type="evidence" value="ECO:0000314"/>
    <property type="project" value="UniProtKB"/>
</dbReference>
<dbReference type="GO" id="GO:0090263">
    <property type="term" value="P:positive regulation of canonical Wnt signaling pathway"/>
    <property type="evidence" value="ECO:0000315"/>
    <property type="project" value="BHF-UCL"/>
</dbReference>
<dbReference type="GO" id="GO:0010628">
    <property type="term" value="P:positive regulation of gene expression"/>
    <property type="evidence" value="ECO:0000314"/>
    <property type="project" value="MGI"/>
</dbReference>
<dbReference type="GO" id="GO:0042307">
    <property type="term" value="P:positive regulation of protein import into nucleus"/>
    <property type="evidence" value="ECO:0000315"/>
    <property type="project" value="BHF-UCL"/>
</dbReference>
<dbReference type="GO" id="GO:0050847">
    <property type="term" value="P:progesterone receptor signaling pathway"/>
    <property type="evidence" value="ECO:0000314"/>
    <property type="project" value="HGNC-UCL"/>
</dbReference>
<dbReference type="GO" id="GO:0043161">
    <property type="term" value="P:proteasome-mediated ubiquitin-dependent protein catabolic process"/>
    <property type="evidence" value="ECO:0000314"/>
    <property type="project" value="UniProtKB"/>
</dbReference>
<dbReference type="GO" id="GO:0141198">
    <property type="term" value="P:protein branched polyubiquitination"/>
    <property type="evidence" value="ECO:0000314"/>
    <property type="project" value="UniProtKB"/>
</dbReference>
<dbReference type="GO" id="GO:0070979">
    <property type="term" value="P:protein K11-linked ubiquitination"/>
    <property type="evidence" value="ECO:0000314"/>
    <property type="project" value="UniProtKB"/>
</dbReference>
<dbReference type="GO" id="GO:0035519">
    <property type="term" value="P:protein K29-linked ubiquitination"/>
    <property type="evidence" value="ECO:0000314"/>
    <property type="project" value="UniProtKB"/>
</dbReference>
<dbReference type="GO" id="GO:0070936">
    <property type="term" value="P:protein K48-linked ubiquitination"/>
    <property type="evidence" value="ECO:0000314"/>
    <property type="project" value="UniProtKB"/>
</dbReference>
<dbReference type="GO" id="GO:0000209">
    <property type="term" value="P:protein polyubiquitination"/>
    <property type="evidence" value="ECO:0000314"/>
    <property type="project" value="BHF-UCL"/>
</dbReference>
<dbReference type="CDD" id="cd14423">
    <property type="entry name" value="CUE_UBR5"/>
    <property type="match status" value="1"/>
</dbReference>
<dbReference type="CDD" id="cd19675">
    <property type="entry name" value="UBR-box_UBR5"/>
    <property type="match status" value="1"/>
</dbReference>
<dbReference type="DisProt" id="DP02717"/>
<dbReference type="FunFam" id="1.10.1900.10:FF:000002">
    <property type="entry name" value="E3 ubiquitin-protein ligase UBR5 isoform X1"/>
    <property type="match status" value="1"/>
</dbReference>
<dbReference type="FunFam" id="3.90.1750.10:FF:000011">
    <property type="entry name" value="E3 ubiquitin-protein ligase UBR5 isoform X1"/>
    <property type="match status" value="1"/>
</dbReference>
<dbReference type="FunFam" id="2.130.10.30:FF:000007">
    <property type="entry name" value="E3 ubiquitin-protein ligase UBR5 isoform X2"/>
    <property type="match status" value="1"/>
</dbReference>
<dbReference type="FunFam" id="3.30.2160.10:FF:000006">
    <property type="entry name" value="E3 ubiquitin-protein ligase UBR5 isoform X2"/>
    <property type="match status" value="1"/>
</dbReference>
<dbReference type="FunFam" id="3.90.1750.10:FF:000016">
    <property type="entry name" value="E3 ubiquitin-protein ligase UBR5 isoform X2"/>
    <property type="match status" value="1"/>
</dbReference>
<dbReference type="FunFam" id="1.10.8.10:FF:000009">
    <property type="entry name" value="Putative E3 ubiquitin-protein ligase UBR5"/>
    <property type="match status" value="1"/>
</dbReference>
<dbReference type="FunFam" id="3.30.2410.10:FF:000008">
    <property type="entry name" value="Putative E3 ubiquitin-protein ligase UBR5"/>
    <property type="match status" value="1"/>
</dbReference>
<dbReference type="Gene3D" id="1.10.1900.10">
    <property type="entry name" value="c-terminal domain of poly(a) binding protein"/>
    <property type="match status" value="1"/>
</dbReference>
<dbReference type="Gene3D" id="1.10.8.10">
    <property type="entry name" value="DNA helicase RuvA subunit, C-terminal domain"/>
    <property type="match status" value="1"/>
</dbReference>
<dbReference type="Gene3D" id="3.30.2160.10">
    <property type="entry name" value="Hect, E3 ligase catalytic domain"/>
    <property type="match status" value="1"/>
</dbReference>
<dbReference type="Gene3D" id="3.30.2410.10">
    <property type="entry name" value="Hect, E3 ligase catalytic domain"/>
    <property type="match status" value="1"/>
</dbReference>
<dbReference type="Gene3D" id="3.90.1750.10">
    <property type="entry name" value="Hect, E3 ligase catalytic domains"/>
    <property type="match status" value="1"/>
</dbReference>
<dbReference type="Gene3D" id="2.130.10.30">
    <property type="entry name" value="Regulator of chromosome condensation 1/beta-lactamase-inhibitor protein II"/>
    <property type="match status" value="1"/>
</dbReference>
<dbReference type="IDEAL" id="IID00191"/>
<dbReference type="InterPro" id="IPR000569">
    <property type="entry name" value="HECT_dom"/>
</dbReference>
<dbReference type="InterPro" id="IPR035983">
    <property type="entry name" value="Hect_E3_ubiquitin_ligase"/>
</dbReference>
<dbReference type="InterPro" id="IPR036053">
    <property type="entry name" value="PABP-dom"/>
</dbReference>
<dbReference type="InterPro" id="IPR002004">
    <property type="entry name" value="PABP_HYD_C"/>
</dbReference>
<dbReference type="InterPro" id="IPR009091">
    <property type="entry name" value="RCC1/BLIP-II"/>
</dbReference>
<dbReference type="InterPro" id="IPR047503">
    <property type="entry name" value="UBR-box_UBR5"/>
</dbReference>
<dbReference type="InterPro" id="IPR024725">
    <property type="entry name" value="UBR5_UBA"/>
</dbReference>
<dbReference type="InterPro" id="IPR003126">
    <property type="entry name" value="Znf_UBR"/>
</dbReference>
<dbReference type="PANTHER" id="PTHR46276">
    <property type="entry name" value="E3 UBIQUITIN-PROTEIN LIGASE UBR5"/>
    <property type="match status" value="1"/>
</dbReference>
<dbReference type="PANTHER" id="PTHR46276:SF1">
    <property type="entry name" value="E3 UBIQUITIN-PROTEIN LIGASE UBR5"/>
    <property type="match status" value="1"/>
</dbReference>
<dbReference type="Pfam" id="PF11547">
    <property type="entry name" value="E3_UbLigase_EDD"/>
    <property type="match status" value="1"/>
</dbReference>
<dbReference type="Pfam" id="PF00632">
    <property type="entry name" value="HECT"/>
    <property type="match status" value="1"/>
</dbReference>
<dbReference type="Pfam" id="PF00658">
    <property type="entry name" value="MLLE"/>
    <property type="match status" value="1"/>
</dbReference>
<dbReference type="SMART" id="SM00119">
    <property type="entry name" value="HECTc"/>
    <property type="match status" value="1"/>
</dbReference>
<dbReference type="SMART" id="SM00517">
    <property type="entry name" value="PolyA"/>
    <property type="match status" value="1"/>
</dbReference>
<dbReference type="SMART" id="SM00396">
    <property type="entry name" value="ZnF_UBR1"/>
    <property type="match status" value="1"/>
</dbReference>
<dbReference type="SUPFAM" id="SSF56204">
    <property type="entry name" value="Hect, E3 ligase catalytic domain"/>
    <property type="match status" value="1"/>
</dbReference>
<dbReference type="SUPFAM" id="SSF63570">
    <property type="entry name" value="PABC (PABP) domain"/>
    <property type="match status" value="1"/>
</dbReference>
<dbReference type="SUPFAM" id="SSF50985">
    <property type="entry name" value="RCC1/BLIP-II"/>
    <property type="match status" value="1"/>
</dbReference>
<dbReference type="PROSITE" id="PS50237">
    <property type="entry name" value="HECT"/>
    <property type="match status" value="1"/>
</dbReference>
<dbReference type="PROSITE" id="PS51309">
    <property type="entry name" value="PABC"/>
    <property type="match status" value="1"/>
</dbReference>
<dbReference type="PROSITE" id="PS51157">
    <property type="entry name" value="ZF_UBR"/>
    <property type="match status" value="1"/>
</dbReference>
<keyword id="KW-0002">3D-structure</keyword>
<keyword id="KW-0007">Acetylation</keyword>
<keyword id="KW-0025">Alternative splicing</keyword>
<keyword id="KW-0963">Cytoplasm</keyword>
<keyword id="KW-0227">DNA damage</keyword>
<keyword id="KW-0234">DNA repair</keyword>
<keyword id="KW-0945">Host-virus interaction</keyword>
<keyword id="KW-0479">Metal-binding</keyword>
<keyword id="KW-0539">Nucleus</keyword>
<keyword id="KW-0597">Phosphoprotein</keyword>
<keyword id="KW-1267">Proteomics identification</keyword>
<keyword id="KW-1185">Reference proteome</keyword>
<keyword id="KW-0808">Transferase</keyword>
<keyword id="KW-0833">Ubl conjugation pathway</keyword>
<keyword id="KW-0862">Zinc</keyword>
<keyword id="KW-0863">Zinc-finger</keyword>
<comment type="function">
    <text evidence="1 9 13 14 15 17 20 21 22 24 25 27 28 29">E3 ubiquitin-protein ligase involved in different protein quality control pathways in the cytoplasm and nucleus (PubMed:29033132, PubMed:33208877, PubMed:37478846, PubMed:37478862). Mainly acts as a ubiquitin chain elongator that extends pre-ubiquitinated substrates (PubMed:29033132, PubMed:37409633). Component of the N-end rule pathway: ubiquitinates proteins bearing specific N-terminal residues that are destabilizing according to the N-end rule, leading to their degradation (By similarity). Recognizes type-1 N-degrons, containing positively charged amino acids (Arg, Lys and His) (By similarity). Together with UBR4, part of a cytoplasm protein quality control pathway that prevents protein aggregation by catalyzing assembly of heterotypic 'Lys-11'-/'Lys-48'-linked branched ubiquitin chains on aggregated proteins, leading to substrate recognition by the segregase p97/VCP and degradation by the proteasome: UBR5 is probably branching multiple 'Lys-48'-linked chains of substrates initially modified with mixed conjugates by UBR4 (PubMed:29033132). Together with ITCH, catalyzes 'Lys-48'-/'Lys-63'-branched ubiquitination of TXNIP, leading to its degradation: UBR5 mediates branching of 'Lys-48'-linked chains of substrates initially modified with 'Lys-63'-linked conjugates by ITCH (PubMed:29378950). Catalytic component of a nuclear protein quality control pathway that mediates ubiquitination and degradation of unpaired transcription factors (i.e. transcription factors that are not assembled into functional multiprotein complexes): specifically recognizes and binds degrons that are not accessible when transcription regulators are associated with their coactivators (PubMed:37478846, PubMed:37478862). Ubiquitinates various unpaired transcription regulator (MYC, SUPT4H1, SUPT5H, CDC20 and MCRS1), as well as ligand-bound nuclear receptors (ESR1, NR1H3, NR3C1, PGR, RARA, RXRA AND VDR) that are not associated with their nuclear receptor coactivators (NCOAs) (PubMed:33208877, PubMed:37478846, PubMed:37478862). Involved in maturation and/or transcriptional regulation of mRNA by mediating polyubiquitination and activation of CDK9 (PubMed:21127351). Also acts as a regulator of DNA damage response by acting as a suppressor of RNF168, an E3 ubiquitin-protein ligase that promotes accumulation of 'Lys-63'-linked histone H2A and H2AX at DNA damage sites, thereby acting as a guard against excessive spreading of ubiquitinated chromatin at damaged chromosomes (PubMed:22884692). Regulates DNA topoisomerase II binding protein (TopBP1) in the DNA damage response (PubMed:11714696). Ubiquitinates acetylated PCK1 (PubMed:21726808). Acts as a positive regulator of the canonical Wnt signaling pathway by mediating (1) ubiquitination and stabilization of CTNNB1, and (2) 'Lys-48'-linked ubiquitination and degradation of TLE3 (PubMed:21118991, PubMed:28689657). Promotes disassembly of the mitotic checkpoint complex (MCC) from the APC/C complex by catalyzing ubiquitination of BUB1B, BUB3 and CDC20 (PubMed:35217622). Plays an essential role in extraembryonic development (By similarity). Required for the maintenance of skeletal tissue homeostasis by acting as an inhibitor of hedgehog (HH) signaling (By similarity).</text>
</comment>
<comment type="catalytic activity">
    <reaction evidence="18 20 21 22 24 26 28 30">
        <text>S-ubiquitinyl-[E2 ubiquitin-conjugating enzyme]-L-cysteine + [acceptor protein]-L-lysine = [E2 ubiquitin-conjugating enzyme]-L-cysteine + N(6)-ubiquitinyl-[acceptor protein]-L-lysine.</text>
        <dbReference type="EC" id="2.3.2.26"/>
    </reaction>
</comment>
<comment type="pathway">
    <text evidence="13 18 20 21 22 24 25 26 27 30">Protein modification; protein ubiquitination.</text>
</comment>
<comment type="subunit">
    <text evidence="9 10 12 14 19 26 27 30">Homotetramer; composed of a dimer of dimers (PubMed:37040767, PubMed:37409633, PubMed:37620400). Associates with CDK9 and TFIIS/TCEA1 and forms a transcription regulatory complex made of CDK9, RNAP II, UBR5 and TFIIS/TCEA1 that can stimulate target gene transcription (e.g. gamma fibrinogen/FGG) by recruiting their promoters (PubMed:21127351). Associates with the E3 ligase complex containing DYRK2, EDD/UBR5, DDB1 and DCAF1 proteins (EDVP complex) (PubMed:19287380). Binds TOPBP1 (PubMed:11714696). Interacts with PIH1D1 (PubMed:24656813). Interacts with CIB1 (PubMed:12011095).</text>
</comment>
<comment type="subunit">
    <text evidence="23">(Microbial infection) Interacts with human T-cell leukemia virus 1/HTLV-1 protein HBZ; this interaction modulates HBZ stability.</text>
</comment>
<comment type="interaction">
    <interactant intactId="EBI-358329">
        <id>O95071</id>
    </interactant>
    <interactant intactId="EBI-491549">
        <id>P35222</id>
        <label>CTNNB1</label>
    </interactant>
    <organismsDiffer>false</organismsDiffer>
    <experiments>6</experiments>
</comment>
<comment type="interaction">
    <interactant intactId="EBI-358329">
        <id>O95071</id>
    </interactant>
    <interactant intactId="EBI-373586">
        <id>P49841</id>
        <label>GSK3B</label>
    </interactant>
    <organismsDiffer>false</organismsDiffer>
    <experiments>8</experiments>
</comment>
<comment type="interaction">
    <interactant intactId="EBI-358329">
        <id>O95071</id>
    </interactant>
    <interactant intactId="EBI-2957445">
        <id>Q9BPZ3</id>
        <label>PAIP2</label>
    </interactant>
    <organismsDiffer>false</organismsDiffer>
    <experiments>5</experiments>
</comment>
<comment type="interaction">
    <interactant intactId="EBI-358329">
        <id>O95071</id>
    </interactant>
    <interactant intactId="EBI-2844096">
        <id>Q9ULT0</id>
        <label>TTC7A</label>
    </interactant>
    <organismsDiffer>false</organismsDiffer>
    <experiments>5</experiments>
</comment>
<comment type="subcellular location">
    <subcellularLocation>
        <location evidence="10 13 20 28">Nucleus</location>
    </subcellularLocation>
    <subcellularLocation>
        <location evidence="21">Cytoplasm</location>
    </subcellularLocation>
</comment>
<comment type="alternative products">
    <event type="alternative splicing"/>
    <isoform>
        <id>O95071-1</id>
        <name>1</name>
        <sequence type="displayed"/>
    </isoform>
    <isoform>
        <id>O95071-2</id>
        <name>2</name>
        <sequence type="described" ref="VSP_054399"/>
    </isoform>
</comment>
<comment type="tissue specificity">
    <text evidence="7">Widely expressed. Most abundant in testis and expressed at high levels in brain, pituitary and kidney.</text>
</comment>
<comment type="domain">
    <text evidence="26">The UBR-type zinc finger forms a pocket that mediates recognition of type 1 N-degrons.</text>
</comment>
<comment type="domain">
    <text evidence="11 27 30">The UBA domain recognizes and binds ubiquitin (PubMed:17897937, PubMed:37620400). It acts as an ubiquitin acceptor required to place 'Lys-48' of ubiquitin into the HECT domain activie site, thereby potentiating the E3 ubiquitin-protein ligase activity (PubMed:37409633, PubMed:37620400).</text>
</comment>
<comment type="similarity">
    <text evidence="34">Belongs to the UBR5 family.</text>
</comment>
<comment type="sequence caution" evidence="34">
    <conflict type="erroneous initiation">
        <sequence resource="EMBL-CDS" id="BAA74919"/>
    </conflict>
</comment>
<sequence length="2799" mass="309352">MTSIHFVVHPLPGTEDQLNDRLREVSEKLNKYNLNSHPPLNVLEQATIKQCVVGPNHAAFLLEDGRVCRIGFSVQPDRLELGKPDNNDGSKLNSNSGAGRTSRPGRTSDSPWFLSGSETLGRLAGNTLGSRWSSGVGGSGGGSSGRSSAGARDSRRQTRVIRTGRDRGSGLLGSQPQPVIPASVIPEELISQAQVVLQGKSRSVIIRELQRTNLDVNLAVNNLLSRDDEDGDDGDDTASESYLPGEDLMSLLDADIHSAHPSVIIDADAMFSEDISYFGYPSFRRSSLSRLGSSRVLLLPLERDSELLRERESVLRLRERRWLDGASFDNERGSTSKEGEPNLDKKNTPVQSPVSLGEDLQWWPDKDGTKFICIGALYSELLAVSSKGELYQWKWSESEPYRNAQNPSLHHPRATFLGLTNEKIVLLSANSIRATVATENNKVATWVDETLSSVASKLEHTAQTYSELQGERIVSLHCCALYTCAQLENSLYWWGVVPFSQRKKMLEKARAKNKKPKSSAGISSMPNITVGTQVCLRNNPLYHAGAVAFSISAGIPKVGVLMESVWNMNDSCRFQLRSPESLKNMEKASKTTEAKPESKQEPVKTEMGPPPSPASTCSDASSIASSASMPYKRRRSTPAPKEEEKVNEEQWSLREVVFVEDVKNVPVGKVLKVDGAYVAVKFPGTSSNTNCQNSSGPDADPSSLLQDCRLLRIDELQVVKTGGTPKVPDCFQRTPKKLCIPEKTEILAVNVDSKGVHAVLKTGNWVRYCIFDLATGKAEQENNFPTSSIAFLGQNERNVAIFTAGQESPIILRDGNGTIYPMAKDCMGGIRDPDWLDLPPISSLGMGVHSLINLPANSTIKKKAAVIIMAVEKQTLMQHILRCDYEACRQYLMNLEQAVVLEQNLQMLQTFISHRCDGNRNILHACVSVCFPTSNKETKEEEEAERSERNTFAERLSAVEAIANAISVVSSNGPGNRAGSSSSRSLRLREMMRRSLRAAGLGRHEAGASSSDHQDPVSPPIAPPSWVPDPPAMDPDGDIDFILAPAVGSLTTAATGTGQGPSTSTIPGPSTEPSVVESKDRKANAHFILKLLCDSVVLQPYLRELLSAKDARGMTPFMSAVSGRAYPAAITILETAQKIAKAEISSSEKEEDVFMGMVCPSGTNPDDSPLYVLCCNDTCSFTWTGAEHINQDIFECRTCGLLESLCCCTECARVCHKGHDCKLKRTSPTAYCDCWEKCKCKTLIAGQKSARLDLLYRLLTATNLVTLPNSRGEHLLLFLVQTVARQTVEHCQYRPPRIREDRNRKTASPEDSDMPDHDLEPPRFAQLALERVLQDWNALKSMIMFGSQENKDPLSASSRIGHLLPEEQVYLNQQSGTIRLDCFTHCLIVKCTADILLLDTLLGTLVKELQNKYTPGRREEAIAVTMRFLRSVARVFVILSVEMASSKKKNNFIPQPIGKCKRVFQALLPYAVEELCNVAESLIVPVRMGIARPTAPFTLASTSIDAMQGSEELFSVEPLPPRPSSDQSSSSSQSQSSYIIRNPQQRRISQSQPVRGRDEEQDDIVSADVEEVEVVEGVAGEEDHHDEQEEHGEENAEAEGQHDEHDEDGSDMELDLLAAAETESDSESNHSNQDNASGRRSVVTAATAGSEAGASSVPAFFSEDDSQSNDSSDSDSSSSQSDDIEQETFMLDEPLERTTNSSHANGAAQAPRSMQWAVRNTQHQRAASTAPSSTSTPAASSAGLIYIDPSNLRRSGTISTSAAAAAAALEASNASSYLTSASSLARAYSIVIRQISDLMGLIPKYNHLVYSQIPAAVKLTYQDAVNLQNYVEEKLIPTWNWMVSIMDSTEAQLRYGSALASAGDPGHPNHPLHASQNSARRERMTAREEASLRTLEGRRRATLLSARQGMMSARGDFLNYALSLMRSHNDEHSDVLPVLDVCSLKHVAYVFQALIYWIKAMNQQTTLDTPQLERKRTRELLELGIDNEDSEHENDDDTNQSATLNDKDDDSLPAETGQNHPFFRRSDSMTFLGCIPPNPFEVPLAEAIPLADQPHLLQPNARKEDLFGRPSQGLYSSSASSGKCLMEVTVDRNCLEVLPTKMSYAANLKNVMNMQNRQKKEGEEQPVLPEETESSKPGPSAHDLAAQLKSSLLAEIGLTESEGPPLTSFRPQCSFMGMVISHDMLLGRWRLSLELFGRVFMEDVGAEPGSILTELGGFEVKESKFRREMEKLRNQQSRDLSLEVDRDRDLLIQQTMRQLNNHFGRRCATTPMAVHRVKVTFKDEPGEGSGVARSFYTAIAQAFLSNEKLPNLECIQNANKGTHTSLMQRLRNRGERDREREREREMRRSSGLRAGSRRDRDRDFRRQLSIDTRPFRPASEGNPSDDPEPLPAHRQALGERLYPRVQAMQPAFASKITGMLLELSPAQLLLLLASEDSLRARVDEAMELIIAHGRENGADSILDLGLVDSSEKVQQENRKRHGSSRSVVDMDLDDTDDGDDNAPLFYQPGKRGFYTPRPGKNTEARLNCFRNIGRILGLCLLQNELCPITLNRHVIKVLLGRKVNWHDFAFFDPVMYESLRQLILASQSSDADAVFSAMDLAFAIDLCKEEGGGQVELIPNGVNIPVTPQNVYEYVRKYAEHRMLVVAEQPLHAMRKGLLDVLPKNSLEDLTAEDFRLLVNGCGEVNVQMLISFTSFNDESGENAEKLLQFKRWFWSIVEKMSMTERQDLVYFWTSSPSLPASEEGFQPMPSITIRPPDDQHLPTANTCISRLYVPLYSSKQILKQKLLLAIKTKNFGFV</sequence>
<organism>
    <name type="scientific">Homo sapiens</name>
    <name type="common">Human</name>
    <dbReference type="NCBI Taxonomy" id="9606"/>
    <lineage>
        <taxon>Eukaryota</taxon>
        <taxon>Metazoa</taxon>
        <taxon>Chordata</taxon>
        <taxon>Craniata</taxon>
        <taxon>Vertebrata</taxon>
        <taxon>Euteleostomi</taxon>
        <taxon>Mammalia</taxon>
        <taxon>Eutheria</taxon>
        <taxon>Euarchontoglires</taxon>
        <taxon>Primates</taxon>
        <taxon>Haplorrhini</taxon>
        <taxon>Catarrhini</taxon>
        <taxon>Hominidae</taxon>
        <taxon>Homo</taxon>
    </lineage>
</organism>
<reference key="1">
    <citation type="journal article" date="1998" name="Oncogene">
        <title>Identification of a human HECT family protein with homology to the Drosophila tumor suppressor gene hyperplastic discs.</title>
        <authorList>
            <person name="Callaghan M.J."/>
            <person name="Russell A.J."/>
            <person name="Woollatt E."/>
            <person name="Sutherland G.R."/>
            <person name="Sutherland R.L."/>
            <person name="Watts C.K.W."/>
        </authorList>
    </citation>
    <scope>NUCLEOTIDE SEQUENCE [MRNA] (ISOFORM 1)</scope>
    <scope>TISSUE SPECIFICITY</scope>
    <source>
        <tissue>Heart</tissue>
        <tissue>Placenta</tissue>
    </source>
</reference>
<reference key="2">
    <citation type="journal article" date="2002" name="J. Biol. Chem.">
        <title>Cooperation of HECT-domain ubiquitin ligase hHYD and DNA topoisomerase II-binding protein for DNA damage response.</title>
        <authorList>
            <person name="Honda Y."/>
            <person name="Tojo M."/>
            <person name="Matsuzaki K."/>
            <person name="Anan T."/>
            <person name="Matsumoto M."/>
            <person name="Ando M."/>
            <person name="Saya H."/>
            <person name="Nakao M."/>
        </authorList>
    </citation>
    <scope>NUCLEOTIDE SEQUENCE [MRNA] (ISOFORM 1)</scope>
    <scope>FUNCTION</scope>
    <scope>INTERACTION WITH TOPBP1</scope>
    <source>
        <tissue>Fetal brain</tissue>
    </source>
</reference>
<reference key="3">
    <citation type="journal article" date="1998" name="DNA Res.">
        <title>Prediction of the coding sequences of unidentified human genes. XII. The complete sequences of 100 new cDNA clones from brain which code for large proteins in vitro.</title>
        <authorList>
            <person name="Nagase T."/>
            <person name="Ishikawa K."/>
            <person name="Suyama M."/>
            <person name="Kikuno R."/>
            <person name="Hirosawa M."/>
            <person name="Miyajima N."/>
            <person name="Tanaka A."/>
            <person name="Kotani H."/>
            <person name="Nomura N."/>
            <person name="Ohara O."/>
        </authorList>
    </citation>
    <scope>NUCLEOTIDE SEQUENCE [LARGE SCALE MRNA] (ISOFORM 2)</scope>
    <source>
        <tissue>Brain</tissue>
    </source>
</reference>
<reference key="4">
    <citation type="journal article" date="2002" name="DNA Res.">
        <title>Construction of expression-ready cDNA clones for KIAA genes: manual curation of 330 KIAA cDNA clones.</title>
        <authorList>
            <person name="Nakajima D."/>
            <person name="Okazaki N."/>
            <person name="Yamakawa H."/>
            <person name="Kikuno R."/>
            <person name="Ohara O."/>
            <person name="Nagase T."/>
        </authorList>
    </citation>
    <scope>SEQUENCE REVISION</scope>
</reference>
<reference key="5">
    <citation type="submission" date="2005-08" db="EMBL/GenBank/DDBJ databases">
        <authorList>
            <person name="Ohara O."/>
            <person name="Nagase T."/>
            <person name="Kikuno R."/>
            <person name="Ishikawa K."/>
            <person name="Suyama M."/>
        </authorList>
    </citation>
    <scope>SEQUENCE REVISION</scope>
</reference>
<reference key="6">
    <citation type="journal article" date="2006" name="Nature">
        <title>DNA sequence and analysis of human chromosome 8.</title>
        <authorList>
            <person name="Nusbaum C."/>
            <person name="Mikkelsen T.S."/>
            <person name="Zody M.C."/>
            <person name="Asakawa S."/>
            <person name="Taudien S."/>
            <person name="Garber M."/>
            <person name="Kodira C.D."/>
            <person name="Schueler M.G."/>
            <person name="Shimizu A."/>
            <person name="Whittaker C.A."/>
            <person name="Chang J.L."/>
            <person name="Cuomo C.A."/>
            <person name="Dewar K."/>
            <person name="FitzGerald M.G."/>
            <person name="Yang X."/>
            <person name="Allen N.R."/>
            <person name="Anderson S."/>
            <person name="Asakawa T."/>
            <person name="Blechschmidt K."/>
            <person name="Bloom T."/>
            <person name="Borowsky M.L."/>
            <person name="Butler J."/>
            <person name="Cook A."/>
            <person name="Corum B."/>
            <person name="DeArellano K."/>
            <person name="DeCaprio D."/>
            <person name="Dooley K.T."/>
            <person name="Dorris L. III"/>
            <person name="Engels R."/>
            <person name="Gloeckner G."/>
            <person name="Hafez N."/>
            <person name="Hagopian D.S."/>
            <person name="Hall J.L."/>
            <person name="Ishikawa S.K."/>
            <person name="Jaffe D.B."/>
            <person name="Kamat A."/>
            <person name="Kudoh J."/>
            <person name="Lehmann R."/>
            <person name="Lokitsang T."/>
            <person name="Macdonald P."/>
            <person name="Major J.E."/>
            <person name="Matthews C.D."/>
            <person name="Mauceli E."/>
            <person name="Menzel U."/>
            <person name="Mihalev A.H."/>
            <person name="Minoshima S."/>
            <person name="Murayama Y."/>
            <person name="Naylor J.W."/>
            <person name="Nicol R."/>
            <person name="Nguyen C."/>
            <person name="O'Leary S.B."/>
            <person name="O'Neill K."/>
            <person name="Parker S.C.J."/>
            <person name="Polley A."/>
            <person name="Raymond C.K."/>
            <person name="Reichwald K."/>
            <person name="Rodriguez J."/>
            <person name="Sasaki T."/>
            <person name="Schilhabel M."/>
            <person name="Siddiqui R."/>
            <person name="Smith C.L."/>
            <person name="Sneddon T.P."/>
            <person name="Talamas J.A."/>
            <person name="Tenzin P."/>
            <person name="Topham K."/>
            <person name="Venkataraman V."/>
            <person name="Wen G."/>
            <person name="Yamazaki S."/>
            <person name="Young S.K."/>
            <person name="Zeng Q."/>
            <person name="Zimmer A.R."/>
            <person name="Rosenthal A."/>
            <person name="Birren B.W."/>
            <person name="Platzer M."/>
            <person name="Shimizu N."/>
            <person name="Lander E.S."/>
        </authorList>
    </citation>
    <scope>NUCLEOTIDE SEQUENCE [LARGE SCALE GENOMIC DNA]</scope>
</reference>
<reference key="7">
    <citation type="journal article" date="2004" name="Genome Res.">
        <title>The status, quality, and expansion of the NIH full-length cDNA project: the Mammalian Gene Collection (MGC).</title>
        <authorList>
            <consortium name="The MGC Project Team"/>
        </authorList>
    </citation>
    <scope>NUCLEOTIDE SEQUENCE [LARGE SCALE MRNA] (ISOFORM 1)</scope>
    <source>
        <tissue>Brain</tissue>
    </source>
</reference>
<reference key="8">
    <citation type="journal article" date="2002" name="J. Biol. Chem.">
        <title>EDD, the human hyperplastic discs protein, has a role in progesterone receptor coactivation and potential involvement in DNA damage response.</title>
        <authorList>
            <person name="Henderson M.J."/>
            <person name="Russell A.J."/>
            <person name="Hird S."/>
            <person name="Munoz M."/>
            <person name="Clancy J.L."/>
            <person name="Lehrbach G.M."/>
            <person name="Calanni S.T."/>
            <person name="Jans D.A."/>
            <person name="Sutherland R.L."/>
            <person name="Watts C.K."/>
        </authorList>
    </citation>
    <scope>SUBCELLULAR LOCATION</scope>
    <scope>INTERACTION WITH CIB1</scope>
</reference>
<reference key="9">
    <citation type="journal article" date="2005" name="Nat. Biotechnol.">
        <title>Immunoaffinity profiling of tyrosine phosphorylation in cancer cells.</title>
        <authorList>
            <person name="Rush J."/>
            <person name="Moritz A."/>
            <person name="Lee K.A."/>
            <person name="Guo A."/>
            <person name="Goss V.L."/>
            <person name="Spek E.J."/>
            <person name="Zhang H."/>
            <person name="Zha X.-M."/>
            <person name="Polakiewicz R.D."/>
            <person name="Comb M.J."/>
        </authorList>
    </citation>
    <scope>PHOSPHORYLATION [LARGE SCALE ANALYSIS] AT TYR-1746</scope>
    <scope>IDENTIFICATION BY MASS SPECTROMETRY [LARGE SCALE ANALYSIS]</scope>
</reference>
<reference key="10">
    <citation type="journal article" date="2006" name="Cell">
        <title>Global, in vivo, and site-specific phosphorylation dynamics in signaling networks.</title>
        <authorList>
            <person name="Olsen J.V."/>
            <person name="Blagoev B."/>
            <person name="Gnad F."/>
            <person name="Macek B."/>
            <person name="Kumar C."/>
            <person name="Mortensen P."/>
            <person name="Mann M."/>
        </authorList>
    </citation>
    <scope>IDENTIFICATION BY MASS SPECTROMETRY [LARGE SCALE ANALYSIS]</scope>
    <source>
        <tissue>Cervix carcinoma</tissue>
    </source>
</reference>
<reference key="11">
    <citation type="journal article" date="2008" name="Mol. Cell">
        <title>Kinase-selective enrichment enables quantitative phosphoproteomics of the kinome across the cell cycle.</title>
        <authorList>
            <person name="Daub H."/>
            <person name="Olsen J.V."/>
            <person name="Bairlein M."/>
            <person name="Gnad F."/>
            <person name="Oppermann F.S."/>
            <person name="Korner R."/>
            <person name="Greff Z."/>
            <person name="Keri G."/>
            <person name="Stemmann O."/>
            <person name="Mann M."/>
        </authorList>
    </citation>
    <scope>PHOSPHORYLATION [LARGE SCALE ANALYSIS] AT THR-1969</scope>
    <scope>IDENTIFICATION BY MASS SPECTROMETRY [LARGE SCALE ANALYSIS]</scope>
    <source>
        <tissue>Cervix carcinoma</tissue>
    </source>
</reference>
<reference key="12">
    <citation type="journal article" date="2008" name="Proc. Natl. Acad. Sci. U.S.A.">
        <title>A quantitative atlas of mitotic phosphorylation.</title>
        <authorList>
            <person name="Dephoure N."/>
            <person name="Zhou C."/>
            <person name="Villen J."/>
            <person name="Beausoleil S.A."/>
            <person name="Bakalarski C.E."/>
            <person name="Elledge S.J."/>
            <person name="Gygi S.P."/>
        </authorList>
    </citation>
    <scope>PHOSPHORYLATION [LARGE SCALE ANALYSIS] AT SER-1308; SER-1549; THR-1969 AND SER-2486</scope>
    <scope>IDENTIFICATION BY MASS SPECTROMETRY [LARGE SCALE ANALYSIS]</scope>
    <source>
        <tissue>Cervix carcinoma</tissue>
    </source>
</reference>
<reference key="13">
    <citation type="journal article" date="2009" name="Anal. Chem.">
        <title>Lys-N and trypsin cover complementary parts of the phosphoproteome in a refined SCX-based approach.</title>
        <authorList>
            <person name="Gauci S."/>
            <person name="Helbig A.O."/>
            <person name="Slijper M."/>
            <person name="Krijgsveld J."/>
            <person name="Heck A.J."/>
            <person name="Mohammed S."/>
        </authorList>
    </citation>
    <scope>ACETYLATION [LARGE SCALE ANALYSIS] AT THR-2</scope>
    <scope>CLEAVAGE OF INITIATOR METHIONINE [LARGE SCALE ANALYSIS]</scope>
    <scope>IDENTIFICATION BY MASS SPECTROMETRY [LARGE SCALE ANALYSIS]</scope>
</reference>
<reference key="14">
    <citation type="journal article" date="2009" name="Mol. Cell. Proteomics">
        <title>Large-scale proteomics analysis of the human kinome.</title>
        <authorList>
            <person name="Oppermann F.S."/>
            <person name="Gnad F."/>
            <person name="Olsen J.V."/>
            <person name="Hornberger R."/>
            <person name="Greff Z."/>
            <person name="Keri G."/>
            <person name="Mann M."/>
            <person name="Daub H."/>
        </authorList>
    </citation>
    <scope>IDENTIFICATION BY MASS SPECTROMETRY [LARGE SCALE ANALYSIS]</scope>
</reference>
<reference key="15">
    <citation type="journal article" date="2009" name="Nat. Cell Biol.">
        <title>Protein kinase DYRK2 is a scaffold that facilitates assembly of an E3 ligase.</title>
        <authorList>
            <person name="Maddika S."/>
            <person name="Chen J."/>
        </authorList>
    </citation>
    <scope>INTERACTION WITH EDVP COMPLEX</scope>
</reference>
<reference key="16">
    <citation type="journal article" date="2009" name="Sci. Signal.">
        <title>Quantitative phosphoproteomic analysis of T cell receptor signaling reveals system-wide modulation of protein-protein interactions.</title>
        <authorList>
            <person name="Mayya V."/>
            <person name="Lundgren D.H."/>
            <person name="Hwang S.-I."/>
            <person name="Rezaul K."/>
            <person name="Wu L."/>
            <person name="Eng J.K."/>
            <person name="Rodionov V."/>
            <person name="Han D.K."/>
        </authorList>
    </citation>
    <scope>PHOSPHORYLATION [LARGE SCALE ANALYSIS] AT SER-2486</scope>
    <scope>IDENTIFICATION BY MASS SPECTROMETRY [LARGE SCALE ANALYSIS]</scope>
    <source>
        <tissue>Leukemic T-cell</tissue>
    </source>
</reference>
<reference key="17">
    <citation type="journal article" date="2010" name="Sci. Signal.">
        <title>Quantitative phosphoproteomics reveals widespread full phosphorylation site occupancy during mitosis.</title>
        <authorList>
            <person name="Olsen J.V."/>
            <person name="Vermeulen M."/>
            <person name="Santamaria A."/>
            <person name="Kumar C."/>
            <person name="Miller M.L."/>
            <person name="Jensen L.J."/>
            <person name="Gnad F."/>
            <person name="Cox J."/>
            <person name="Jensen T.S."/>
            <person name="Nigg E.A."/>
            <person name="Brunak S."/>
            <person name="Mann M."/>
        </authorList>
    </citation>
    <scope>PHOSPHORYLATION [LARGE SCALE ANALYSIS] AT SER-1549 AND THR-1969</scope>
    <scope>IDENTIFICATION BY MASS SPECTROMETRY [LARGE SCALE ANALYSIS]</scope>
    <source>
        <tissue>Cervix carcinoma</tissue>
    </source>
</reference>
<reference key="18">
    <citation type="journal article" date="2011" name="BMC Syst. Biol.">
        <title>Initial characterization of the human central proteome.</title>
        <authorList>
            <person name="Burkard T.R."/>
            <person name="Planyavsky M."/>
            <person name="Kaupe I."/>
            <person name="Breitwieser F.P."/>
            <person name="Buerckstuemmer T."/>
            <person name="Bennett K.L."/>
            <person name="Superti-Furga G."/>
            <person name="Colinge J."/>
        </authorList>
    </citation>
    <scope>IDENTIFICATION BY MASS SPECTROMETRY [LARGE SCALE ANALYSIS]</scope>
</reference>
<reference key="19">
    <citation type="journal article" date="2011" name="J. Biol. Chem.">
        <title>Transcription factor IIS cooperates with the E3 ligase UBR5 to ubiquitinate the CDK9 subunit of the positive transcription elongation factor B.</title>
        <authorList>
            <person name="Cojocaru M."/>
            <person name="Bouchard A."/>
            <person name="Cloutier P."/>
            <person name="Cooper J.J."/>
            <person name="Varzavand K."/>
            <person name="Price D.H."/>
            <person name="Coulombe B."/>
        </authorList>
    </citation>
    <scope>FUNCTION AS CDK9 UBIQUITIN LIGASE</scope>
    <scope>INTERACTION WITH CDK9 AND TFIIS/TCEA1</scope>
</reference>
<reference key="20">
    <citation type="journal article" date="2011" name="J. Proteomics">
        <title>Identification of phosphorylation sites on the E3 ubiquitin ligase UBR5/EDD.</title>
        <authorList>
            <person name="Bethard J.R."/>
            <person name="Zheng H."/>
            <person name="Roberts L."/>
            <person name="Eblen S.T."/>
        </authorList>
    </citation>
    <scope>PHOSPHORYLATION AT SER-110; SER-327; SER-352; SER-578; SER-612; THR-637; SER-808; SER-928; SER-1018; THR-1115; THR-1135; SER-1227; SER-1308; SER-1355; SER-1375; SER-1481; THR-1736; SER-1741; SER-1780; THR-1969; SER-2026; SER-2028; THR-2030; SER-2076; THR-2213; SER-2289 AND SER-2484</scope>
</reference>
<reference key="21">
    <citation type="journal article" date="2011" name="Mol. Biol. Cell">
        <title>The EDD E3 ubiquitin ligase ubiquitinates and up-regulates beta-catenin.</title>
        <authorList>
            <person name="Hay-Koren A."/>
            <person name="Caspi M."/>
            <person name="Zilberberg A."/>
            <person name="Rosin-Arbesfeld R."/>
        </authorList>
    </citation>
    <scope>FUNCTION</scope>
    <scope>PATHWAY</scope>
    <scope>SUBCELLULAR LOCATION</scope>
</reference>
<reference key="22">
    <citation type="journal article" date="2011" name="Mol. Cell">
        <title>Acetylation regulates gluconeogenesis by promoting PEPCK1 degradation via recruiting the UBR5 ubiquitin ligase.</title>
        <authorList>
            <person name="Jiang W."/>
            <person name="Wang S."/>
            <person name="Xiao M."/>
            <person name="Lin Y."/>
            <person name="Zhou L."/>
            <person name="Lei Q."/>
            <person name="Xiong Y."/>
            <person name="Guan K.L."/>
            <person name="Zhao S."/>
        </authorList>
    </citation>
    <scope>FUNCTION IN UBIQUITINATION OF PCK1</scope>
</reference>
<reference key="23">
    <citation type="journal article" date="2011" name="Sci. Signal.">
        <title>System-wide temporal characterization of the proteome and phosphoproteome of human embryonic stem cell differentiation.</title>
        <authorList>
            <person name="Rigbolt K.T."/>
            <person name="Prokhorova T.A."/>
            <person name="Akimov V."/>
            <person name="Henningsen J."/>
            <person name="Johansen P.T."/>
            <person name="Kratchmarova I."/>
            <person name="Kassem M."/>
            <person name="Mann M."/>
            <person name="Olsen J.V."/>
            <person name="Blagoev B."/>
        </authorList>
    </citation>
    <scope>PHOSPHORYLATION [LARGE SCALE ANALYSIS] AT SER-327; SER-1549 AND SER-2486</scope>
    <scope>IDENTIFICATION BY MASS SPECTROMETRY [LARGE SCALE ANALYSIS]</scope>
</reference>
<reference key="24">
    <citation type="journal article" date="2012" name="Cell">
        <title>TRIP12 and UBR5 Suppress Spreading of Chromatin Ubiquitylation at Damaged Chromosomes.</title>
        <authorList>
            <person name="Gudjonsson T."/>
            <person name="Altmeyer M."/>
            <person name="Savic V."/>
            <person name="Toledo L."/>
            <person name="Dinant C."/>
            <person name="Grofte M."/>
            <person name="Bartkova J."/>
            <person name="Poulsen M."/>
            <person name="Oka Y."/>
            <person name="Bekker-Jensen S."/>
            <person name="Mailand N."/>
            <person name="Neumann B."/>
            <person name="Heriche J.K."/>
            <person name="Shearer R."/>
            <person name="Saunders D."/>
            <person name="Bartek J."/>
            <person name="Lukas J."/>
            <person name="Lukas C."/>
        </authorList>
    </citation>
    <scope>FUNCTION</scope>
</reference>
<reference key="25">
    <citation type="journal article" date="2014" name="Cell">
        <authorList>
            <person name="Gudjonsson T."/>
            <person name="Altmeyer M."/>
            <person name="Savic V."/>
            <person name="Toledo L."/>
            <person name="Dinant C."/>
            <person name="Grofte M."/>
            <person name="Bartkova J."/>
            <person name="Poulsen M."/>
            <person name="Oka Y."/>
            <person name="Bekker-Jensen S."/>
            <person name="Mailand N."/>
            <person name="Neumann B."/>
            <person name="Heriche J.K."/>
            <person name="Shearer R."/>
            <person name="Saunders D."/>
            <person name="Bartek J."/>
            <person name="Lukas J."/>
            <person name="Lukas C."/>
        </authorList>
    </citation>
    <scope>ERRATUM OF PUBMED:22884692</scope>
</reference>
<reference key="26">
    <citation type="journal article" date="2013" name="J. Proteome Res.">
        <title>Toward a comprehensive characterization of a human cancer cell phosphoproteome.</title>
        <authorList>
            <person name="Zhou H."/>
            <person name="Di Palma S."/>
            <person name="Preisinger C."/>
            <person name="Peng M."/>
            <person name="Polat A.N."/>
            <person name="Heck A.J."/>
            <person name="Mohammed S."/>
        </authorList>
    </citation>
    <scope>PHOSPHORYLATION [LARGE SCALE ANALYSIS] AT SER-110; SER-327; SER-578; SER-612; SER-808; SER-1308; SER-1549; THR-1969; SER-2241; SER-2469 AND SER-2486</scope>
    <scope>IDENTIFICATION BY MASS SPECTROMETRY [LARGE SCALE ANALYSIS]</scope>
    <source>
        <tissue>Cervix carcinoma</tissue>
        <tissue>Erythroleukemia</tissue>
    </source>
</reference>
<reference key="27">
    <citation type="journal article" date="2014" name="Cell Rep.">
        <title>Phosphorylation-dependent PIH1D1 interactions define substrate specificity of the R2TP cochaperone complex.</title>
        <authorList>
            <person name="Horejsi Z."/>
            <person name="Stach L."/>
            <person name="Flower T.G."/>
            <person name="Joshi D."/>
            <person name="Flynn H."/>
            <person name="Skehel J.M."/>
            <person name="O'Reilly N.J."/>
            <person name="Ogrodowicz R.W."/>
            <person name="Smerdon S.J."/>
            <person name="Boulton S.J."/>
        </authorList>
    </citation>
    <scope>INTERACTION WITH PIH1D1</scope>
</reference>
<reference key="28">
    <citation type="journal article" date="2014" name="J. Proteomics">
        <title>An enzyme assisted RP-RPLC approach for in-depth analysis of human liver phosphoproteome.</title>
        <authorList>
            <person name="Bian Y."/>
            <person name="Song C."/>
            <person name="Cheng K."/>
            <person name="Dong M."/>
            <person name="Wang F."/>
            <person name="Huang J."/>
            <person name="Sun D."/>
            <person name="Wang L."/>
            <person name="Ye M."/>
            <person name="Zou H."/>
        </authorList>
    </citation>
    <scope>PHOSPHORYLATION [LARGE SCALE ANALYSIS] AT SER-1549 AND SER-1990</scope>
    <scope>IDENTIFICATION BY MASS SPECTROMETRY [LARGE SCALE ANALYSIS]</scope>
    <source>
        <tissue>Liver</tissue>
    </source>
</reference>
<reference key="29">
    <citation type="journal article" date="2017" name="Cell">
        <title>Assembly and function of heterotypic ubiquitin chains in cell-cycle and protein quality control.</title>
        <authorList>
            <person name="Yau R.G."/>
            <person name="Doerner K."/>
            <person name="Castellanos E.R."/>
            <person name="Haakonsen D.L."/>
            <person name="Werner A."/>
            <person name="Wang N."/>
            <person name="Yang X.W."/>
            <person name="Martinez-Martin N."/>
            <person name="Matsumoto M.L."/>
            <person name="Dixit V.M."/>
            <person name="Rape M."/>
        </authorList>
    </citation>
    <scope>FUNCTION</scope>
    <scope>CATALYTIC ACTIVITY</scope>
    <scope>PATHWAY</scope>
    <scope>SUBCELLULAR LOCATION</scope>
</reference>
<reference key="30">
    <citation type="journal article" date="2017" name="Mol. Cell">
        <title>Wnt-dependent inactivation of the Groucho/TLE co-repressor by the HECT E3 ubiquitin ligase Hyd/UBR5.</title>
        <authorList>
            <person name="Flack J.E."/>
            <person name="Mieszczanek J."/>
            <person name="Novcic N."/>
            <person name="Bienz M."/>
        </authorList>
    </citation>
    <scope>FUNCTION</scope>
    <scope>CATALYTIC ACTIVITY</scope>
    <scope>SUBCELLULAR LOCATION</scope>
    <scope>PATHWAY</scope>
    <scope>ACTIVE SITE</scope>
    <scope>MUTAGENESIS OF CYS-2768</scope>
</reference>
<reference key="31">
    <citation type="journal article" date="2018" name="Front. Microbiol.">
        <title>Stability of the HTLV-1 Antisense-Derived Protein, HBZ, Is Regulated by the E3 Ubiquitin-Protein Ligase, UBR5.</title>
        <authorList>
            <person name="Panfil A.R."/>
            <person name="Al-Saleem J."/>
            <person name="Howard C.M."/>
            <person name="Shkriabai N."/>
            <person name="Kvaratskhelia M."/>
            <person name="Green P.L."/>
        </authorList>
    </citation>
    <scope>INTERACTION WITH HUMAN T-CELL LEUKEMIA VIRUS 1 PROTEIN HBZ</scope>
</reference>
<reference key="32">
    <citation type="journal article" date="2018" name="Proc. Natl. Acad. Sci. U.S.A.">
        <title>K63 ubiquitylation triggers proteasomal degradation by seeding branched ubiquitin chains.</title>
        <authorList>
            <person name="Ohtake F."/>
            <person name="Tsuchiya H."/>
            <person name="Saeki Y."/>
            <person name="Tanaka K."/>
        </authorList>
    </citation>
    <scope>FUNCTION</scope>
    <scope>CATALYTIC ACTIVITY</scope>
    <scope>PATHWAY</scope>
</reference>
<reference key="33">
    <citation type="journal article" date="2020" name="Sci. Rep.">
        <title>Identification of the HECT E3 ligase UBR5 as a regulator of MYC degradation using a CRISPR/Cas9 screen.</title>
        <authorList>
            <person name="Schukur L."/>
            <person name="Zimmermann T."/>
            <person name="Niewoehner O."/>
            <person name="Kerr G."/>
            <person name="Gleim S."/>
            <person name="Bauer-Probst B."/>
            <person name="Knapp B."/>
            <person name="Galli G.G."/>
            <person name="Liang X."/>
            <person name="Mendiola A."/>
            <person name="Reece-Hoyes J."/>
            <person name="Rapti M."/>
            <person name="Barbosa I."/>
            <person name="Reschke M."/>
            <person name="Radimerski T."/>
            <person name="Thoma C.R."/>
        </authorList>
    </citation>
    <scope>FUNCTION</scope>
    <scope>CATALYTIC ACTIVITY</scope>
    <scope>PATHWAY</scope>
</reference>
<reference key="34">
    <citation type="journal article" date="2022" name="Proc. Natl. Acad. Sci. U.S.A.">
        <title>Role of ubiquitin-protein ligase UBR5 in the disassembly of mitotic checkpoint complexes.</title>
        <authorList>
            <person name="Kaisari S."/>
            <person name="Miniowitz-Shemtov S."/>
            <person name="Sitry-Shevah D."/>
            <person name="Shomer P."/>
            <person name="Kozlov G."/>
            <person name="Gehring K."/>
            <person name="Hershko A."/>
        </authorList>
    </citation>
    <scope>FUNCTION</scope>
</reference>
<reference key="35">
    <citation type="journal article" date="2023" name="Cell">
        <title>Orphan quality control shapes network dynamics and gene expression.</title>
        <authorList>
            <person name="Mark K.G."/>
            <person name="Kolla S."/>
            <person name="Aguirre J.D."/>
            <person name="Garshott D.M."/>
            <person name="Schmitt S."/>
            <person name="Haakonsen D.L."/>
            <person name="Xu C."/>
            <person name="Kater L."/>
            <person name="Kempf G."/>
            <person name="Martinez-Gonzalez B."/>
            <person name="Akopian D."/>
            <person name="See S.K."/>
            <person name="Thomae N.H."/>
            <person name="Rape M."/>
        </authorList>
    </citation>
    <scope>FUNCTION</scope>
    <scope>ACTIVE SITE</scope>
    <scope>MUTAGENESIS OF CYS-2768</scope>
</reference>
<reference key="36">
    <citation type="journal article" date="2001" name="Proc. Natl. Acad. Sci. U.S.A.">
        <title>X-ray structure of the human hyperplastic discs protein: an ortholog of the C-terminal domain of poly(A)-binding protein.</title>
        <authorList>
            <person name="Deo R.C."/>
            <person name="Sonenberg N."/>
            <person name="Burley S.K."/>
        </authorList>
    </citation>
    <scope>X-RAY CRYSTALLOGRAPHY (1.04 ANGSTROMS) OF 2391-2455</scope>
    <scope>ACTIVE SITE</scope>
    <scope>MUTAGENESIS OF CYS-2768</scope>
</reference>
<reference evidence="41" key="37">
    <citation type="journal article" date="2007" name="J. Biol. Chem.">
        <title>Structural basis of ubiquitin recognition by the ubiquitin-associated (UBA) domain of the ubiquitin ligase EDD.</title>
        <authorList>
            <person name="Kozlov G."/>
            <person name="Nguyen L."/>
            <person name="Lin T."/>
            <person name="De Crescenzo G."/>
            <person name="Park M."/>
            <person name="Gehring K."/>
        </authorList>
    </citation>
    <scope>X-RAY CRYSTALLOGRAPHY (1.85 ANGSTROMS) OF 180-230</scope>
    <scope>DOMAIN</scope>
    <scope>MUTAGENESIS OF VAL-196; LEU-214; LEU-218 AND LEU-224</scope>
</reference>
<reference evidence="42" key="38">
    <citation type="journal article" date="2012" name="Acta Crystallogr. F">
        <title>Structure of the HECT C-lobe of the UBR5 E3 ubiquitin ligase.</title>
        <authorList>
            <person name="Matta-Camacho E."/>
            <person name="Kozlov G."/>
            <person name="Menade M."/>
            <person name="Gehring K."/>
        </authorList>
    </citation>
    <scope>X-RAY CRYSTALLOGRAPHY (1.97 ANGSTROMS) OF 2687-2799</scope>
    <scope>CATALYTIC ACTIVITY</scope>
    <scope>PATHWAY</scope>
    <scope>ACTIVE SITE</scope>
    <scope>MUTAGENESIS OF CYS-2768</scope>
</reference>
<reference evidence="46 47 48" key="39">
    <citation type="journal article" date="2023" name="Structure">
        <title>Structure of the human UBR5 E3 ubiquitin ligase.</title>
        <authorList>
            <person name="Wang F."/>
            <person name="He Q."/>
            <person name="Zhan W."/>
            <person name="Yu Z."/>
            <person name="Finkin-Groner E."/>
            <person name="Ma X."/>
            <person name="Lin G."/>
            <person name="Li H."/>
        </authorList>
    </citation>
    <scope>STRUCTURE BY ELECTRON MICROSCOPY (2.66 ANGSTROMS) IN COMPLE WITH ZINC</scope>
    <scope>CATALYTIC ACTIVITY</scope>
    <scope>PATHWAY</scope>
    <scope>SUBUNIT</scope>
    <scope>DOMAIN</scope>
    <scope>ACTIVE SITE</scope>
    <scope>MUTAGENESIS OF VAL-196; LEU-224; TYR-2576; PHE-2732; CYS-2768 AND ALA-2790</scope>
</reference>
<reference evidence="43" key="40">
    <citation type="journal article" date="2023" name="EMBO J.">
        <title>Cryo-EM structure of the chain-elongating E3 ubiquitin ligase UBR5.</title>
        <authorList>
            <person name="Hodakova Z."/>
            <person name="Grishkovskaya I."/>
            <person name="Brunner H.L."/>
            <person name="Bolhuis D.L."/>
            <person name="Belacic K."/>
            <person name="Schleiffer A."/>
            <person name="Kotisch H."/>
            <person name="Brown N.G."/>
            <person name="Haselbach D."/>
        </authorList>
    </citation>
    <scope>STRUCTURE BY ELECTRON MICROSCOPY (3.00 ANGSTROMS) OF 1-2798 IN COMPLEX WITH ZINC</scope>
    <scope>FUNCTION</scope>
    <scope>PATHWAY</scope>
    <scope>SUBUNIT</scope>
    <scope>DOMAIN</scope>
    <scope>MUTAGENESIS OF VAL-196; LEU-224; ARG-1914; ARG-1926 AND GLU-1931</scope>
</reference>
<reference evidence="49 50" key="41">
    <citation type="journal article" date="2023" name="Mol. Cell">
        <title>UBR5 forms ligand-dependent complexes on chromatin to regulate nuclear hormone receptor stability.</title>
        <authorList>
            <person name="Tsai J.M."/>
            <person name="Aguirre J.D."/>
            <person name="Li Y.D."/>
            <person name="Brown J."/>
            <person name="Focht V."/>
            <person name="Kater L."/>
            <person name="Kempf G."/>
            <person name="Sandoval B."/>
            <person name="Schmitt S."/>
            <person name="Rutter J.C."/>
            <person name="Galli P."/>
            <person name="Sandate C.R."/>
            <person name="Cutler J.A."/>
            <person name="Zou C."/>
            <person name="Donovan K.A."/>
            <person name="Lumpkin R.J."/>
            <person name="Cavadini S."/>
            <person name="Park P.M.C."/>
            <person name="Sievers Q."/>
            <person name="Hatton C."/>
            <person name="Ener E."/>
            <person name="Regalado B.D."/>
            <person name="Sperling M.T."/>
            <person name="Slabicki M."/>
            <person name="Kim J."/>
            <person name="Zon R."/>
            <person name="Zhang Z."/>
            <person name="Miller P.G."/>
            <person name="Belizaire R."/>
            <person name="Sperling A.S."/>
            <person name="Fischer E.S."/>
            <person name="Irizarry R."/>
            <person name="Armstrong S.A."/>
            <person name="Thomae N.H."/>
            <person name="Ebert B.L."/>
        </authorList>
    </citation>
    <scope>STRUCTURE BY ELECTRON MICROSCOPY (3.36 ANGSTROMS) IN COMPLEX WITH ZINC</scope>
    <scope>FUNCTION</scope>
    <scope>CATALYTIC ACTIVITY</scope>
    <scope>SUBCELLULAR LOCATION</scope>
    <scope>MUTAGENESIS OF VAL-196</scope>
</reference>
<reference evidence="44 45" key="42">
    <citation type="journal article" date="2024" name="Nat. Chem. Biol.">
        <title>Structural snapshots along K48-linked ubiquitin chain formation by the HECT E3 UBR5.</title>
        <authorList>
            <person name="Hehl L.A."/>
            <person name="Horn-Ghetko D."/>
            <person name="Prabu J.R."/>
            <person name="Vollrath R."/>
            <person name="Vu D.T."/>
            <person name="Perez Berrocal D.A."/>
            <person name="Mulder M.P.C."/>
            <person name="van der Heden van Noort G.J."/>
            <person name="Schulman B.A."/>
        </authorList>
    </citation>
    <scope>STRUCTURE BY ELECTRON MICROSCOPY (2.70 ANGSTROMS) IN COMPLEX WITH ZINC</scope>
    <scope>CATALYTIC ACTIVITY</scope>
    <scope>PATHWAY</scope>
    <scope>SUBUNIT</scope>
    <scope>DOMAIN</scope>
    <scope>ACTIVE SITE</scope>
    <scope>MUTAGENESIS OF CYS-2768 AND ALA-2790</scope>
</reference>
<accession>O95071</accession>
<accession>B2RP24</accession>
<accession>J3KMW7</accession>
<accession>O94970</accession>
<accession>Q9NPL3</accession>
<proteinExistence type="evidence at protein level"/>
<feature type="initiator methionine" description="Removed" evidence="54">
    <location>
        <position position="1"/>
    </location>
</feature>
<feature type="chain" id="PRO_0000086931" description="E3 ubiquitin-protein ligase UBR5">
    <location>
        <begin position="2"/>
        <end position="2799"/>
    </location>
</feature>
<feature type="domain" description="UBA" evidence="3 11 26 27 30">
    <location>
        <begin position="184"/>
        <end position="226"/>
    </location>
</feature>
<feature type="domain" description="PABC" evidence="5">
    <location>
        <begin position="2377"/>
        <end position="2454"/>
    </location>
</feature>
<feature type="domain" description="HECT" evidence="2">
    <location>
        <begin position="2462"/>
        <end position="2799"/>
    </location>
</feature>
<feature type="zinc finger region" description="UBR-type" evidence="4">
    <location>
        <begin position="1177"/>
        <end position="1245"/>
    </location>
</feature>
<feature type="region of interest" description="Disordered" evidence="6">
    <location>
        <begin position="77"/>
        <end position="175"/>
    </location>
</feature>
<feature type="region of interest" description="Disordered" evidence="6">
    <location>
        <begin position="328"/>
        <end position="352"/>
    </location>
</feature>
<feature type="region of interest" description="Disordered" evidence="6">
    <location>
        <begin position="579"/>
        <end position="648"/>
    </location>
</feature>
<feature type="region of interest" description="Disordered" evidence="6">
    <location>
        <begin position="999"/>
        <end position="1031"/>
    </location>
</feature>
<feature type="region of interest" description="Disordered" evidence="6">
    <location>
        <begin position="1052"/>
        <end position="1075"/>
    </location>
</feature>
<feature type="region of interest" description="Disordered" evidence="6">
    <location>
        <begin position="1299"/>
        <end position="1318"/>
    </location>
</feature>
<feature type="region of interest" description="Disordered" evidence="6">
    <location>
        <begin position="1515"/>
        <end position="1740"/>
    </location>
</feature>
<feature type="region of interest" description="Disordered" evidence="6">
    <location>
        <begin position="1859"/>
        <end position="1890"/>
    </location>
</feature>
<feature type="region of interest" description="Disordered" evidence="6">
    <location>
        <begin position="1984"/>
        <end position="2021"/>
    </location>
</feature>
<feature type="region of interest" description="Disordered" evidence="6">
    <location>
        <begin position="2117"/>
        <end position="2142"/>
    </location>
</feature>
<feature type="region of interest" description="Disordered" evidence="6">
    <location>
        <begin position="2323"/>
        <end position="2392"/>
    </location>
</feature>
<feature type="region of interest" description="Disordered" evidence="6">
    <location>
        <begin position="2473"/>
        <end position="2493"/>
    </location>
</feature>
<feature type="compositionally biased region" description="Basic and acidic residues" evidence="6">
    <location>
        <begin position="77"/>
        <end position="88"/>
    </location>
</feature>
<feature type="compositionally biased region" description="Polar residues" evidence="6">
    <location>
        <begin position="89"/>
        <end position="110"/>
    </location>
</feature>
<feature type="compositionally biased region" description="Gly residues" evidence="6">
    <location>
        <begin position="135"/>
        <end position="144"/>
    </location>
</feature>
<feature type="compositionally biased region" description="Basic and acidic residues" evidence="6">
    <location>
        <begin position="328"/>
        <end position="347"/>
    </location>
</feature>
<feature type="compositionally biased region" description="Basic and acidic residues" evidence="6">
    <location>
        <begin position="583"/>
        <end position="604"/>
    </location>
</feature>
<feature type="compositionally biased region" description="Low complexity" evidence="6">
    <location>
        <begin position="614"/>
        <end position="628"/>
    </location>
</feature>
<feature type="compositionally biased region" description="Pro residues" evidence="6">
    <location>
        <begin position="1017"/>
        <end position="1031"/>
    </location>
</feature>
<feature type="compositionally biased region" description="Polar residues" evidence="6">
    <location>
        <begin position="1052"/>
        <end position="1073"/>
    </location>
</feature>
<feature type="compositionally biased region" description="Low complexity" evidence="6">
    <location>
        <begin position="1524"/>
        <end position="1537"/>
    </location>
</feature>
<feature type="compositionally biased region" description="Polar residues" evidence="6">
    <location>
        <begin position="1538"/>
        <end position="1553"/>
    </location>
</feature>
<feature type="compositionally biased region" description="Acidic residues" evidence="6">
    <location>
        <begin position="1559"/>
        <end position="1574"/>
    </location>
</feature>
<feature type="compositionally biased region" description="Acidic residues" evidence="6">
    <location>
        <begin position="1605"/>
        <end position="1614"/>
    </location>
</feature>
<feature type="compositionally biased region" description="Polar residues" evidence="6">
    <location>
        <begin position="1629"/>
        <end position="1638"/>
    </location>
</feature>
<feature type="compositionally biased region" description="Low complexity" evidence="6">
    <location>
        <begin position="1641"/>
        <end position="1657"/>
    </location>
</feature>
<feature type="compositionally biased region" description="Low complexity" evidence="6">
    <location>
        <begin position="1668"/>
        <end position="1681"/>
    </location>
</feature>
<feature type="compositionally biased region" description="Low complexity" evidence="6">
    <location>
        <begin position="1726"/>
        <end position="1740"/>
    </location>
</feature>
<feature type="compositionally biased region" description="Basic and acidic residues" evidence="6">
    <location>
        <begin position="1879"/>
        <end position="1890"/>
    </location>
</feature>
<feature type="compositionally biased region" description="Acidic residues" evidence="6">
    <location>
        <begin position="1985"/>
        <end position="1998"/>
    </location>
</feature>
<feature type="compositionally biased region" description="Basic and acidic residues" evidence="6">
    <location>
        <begin position="2332"/>
        <end position="2348"/>
    </location>
</feature>
<feature type="compositionally biased region" description="Basic and acidic residues" evidence="6">
    <location>
        <begin position="2356"/>
        <end position="2368"/>
    </location>
</feature>
<feature type="active site" description="Glycyl thioester intermediate" evidence="2 35 36 37 38 39 40">
    <location>
        <position position="2768"/>
    </location>
</feature>
<feature type="binding site" evidence="26 27 28 30 43 44 46 47 48 49">
    <location>
        <position position="1179"/>
    </location>
    <ligand>
        <name>Zn(2+)</name>
        <dbReference type="ChEBI" id="CHEBI:29105"/>
        <label>1</label>
    </ligand>
</feature>
<feature type="binding site" evidence="26 27 28 30 43 44 46 47 48 49">
    <location>
        <position position="1196"/>
    </location>
    <ligand>
        <name>Zn(2+)</name>
        <dbReference type="ChEBI" id="CHEBI:29105"/>
        <label>2</label>
    </ligand>
</feature>
<feature type="binding site" evidence="26 27 28 30 43 44 46 47 48 49">
    <location>
        <position position="1199"/>
    </location>
    <ligand>
        <name>Zn(2+)</name>
        <dbReference type="ChEBI" id="CHEBI:29105"/>
        <label>2</label>
    </ligand>
</feature>
<feature type="binding site" evidence="26 27 28 30 43 44 46 47 48 49">
    <location>
        <position position="1208"/>
    </location>
    <ligand>
        <name>Zn(2+)</name>
        <dbReference type="ChEBI" id="CHEBI:29105"/>
        <label>1</label>
    </ligand>
</feature>
<feature type="binding site" evidence="26 27 28 30 43 44 46 47 48 49">
    <location>
        <position position="1211"/>
    </location>
    <ligand>
        <name>Zn(2+)</name>
        <dbReference type="ChEBI" id="CHEBI:29105"/>
        <label>1</label>
    </ligand>
</feature>
<feature type="binding site" evidence="26 27 28 30 43 44 46 47 48 49">
    <location>
        <position position="1211"/>
    </location>
    <ligand>
        <name>Zn(2+)</name>
        <dbReference type="ChEBI" id="CHEBI:29105"/>
        <label>3</label>
    </ligand>
</feature>
<feature type="binding site" evidence="26 27 28 30 43 44 46 47 48 49">
    <location>
        <position position="1215"/>
    </location>
    <ligand>
        <name>Zn(2+)</name>
        <dbReference type="ChEBI" id="CHEBI:29105"/>
        <label>3</label>
    </ligand>
</feature>
<feature type="binding site" evidence="26 27 28 30 43 44 46 47 48 49">
    <location>
        <position position="1216"/>
    </location>
    <ligand>
        <name>Zn(2+)</name>
        <dbReference type="ChEBI" id="CHEBI:29105"/>
        <label>2</label>
    </ligand>
</feature>
<feature type="binding site" evidence="26 27 28 30 43 44 46 47 48 49">
    <location>
        <position position="1219"/>
    </location>
    <ligand>
        <name>Zn(2+)</name>
        <dbReference type="ChEBI" id="CHEBI:29105"/>
        <label>2</label>
    </ligand>
</feature>
<feature type="binding site" evidence="26 27 28 30 43 44 46 47 48 49">
    <location>
        <position position="1232"/>
    </location>
    <ligand>
        <name>Zn(2+)</name>
        <dbReference type="ChEBI" id="CHEBI:29105"/>
        <label>1</label>
    </ligand>
</feature>
<feature type="binding site" evidence="26 27 28 30 43 44 46 47 48 49">
    <location>
        <position position="1234"/>
    </location>
    <ligand>
        <name>Zn(2+)</name>
        <dbReference type="ChEBI" id="CHEBI:29105"/>
        <label>3</label>
    </ligand>
</feature>
<feature type="binding site" evidence="26 27 28 30 43 44 46 47 48 49">
    <location>
        <position position="1240"/>
    </location>
    <ligand>
        <name>Zn(2+)</name>
        <dbReference type="ChEBI" id="CHEBI:29105"/>
        <label>3</label>
    </ligand>
</feature>
<feature type="modified residue" description="N-acetylthreonine" evidence="54">
    <location>
        <position position="2"/>
    </location>
</feature>
<feature type="modified residue" description="Phosphoserine" evidence="16 58">
    <location>
        <position position="110"/>
    </location>
</feature>
<feature type="modified residue" description="Phosphoserine" evidence="16 57 58">
    <location>
        <position position="327"/>
    </location>
</feature>
<feature type="modified residue" description="Phosphoserine" evidence="16">
    <location>
        <position position="352"/>
    </location>
</feature>
<feature type="modified residue" description="Phosphoserine" evidence="16 58">
    <location>
        <position position="578"/>
    </location>
</feature>
<feature type="modified residue" description="Phosphoserine" evidence="16 58">
    <location>
        <position position="612"/>
    </location>
</feature>
<feature type="modified residue" description="Phosphothreonine" evidence="16">
    <location>
        <position position="637"/>
    </location>
</feature>
<feature type="modified residue" description="Phosphoserine" evidence="16 58">
    <location>
        <position position="808"/>
    </location>
</feature>
<feature type="modified residue" description="Phosphoserine" evidence="16">
    <location>
        <position position="928"/>
    </location>
</feature>
<feature type="modified residue" description="Phosphoserine" evidence="16">
    <location>
        <position position="1018"/>
    </location>
</feature>
<feature type="modified residue" description="Phosphothreonine" evidence="16">
    <location>
        <position position="1115"/>
    </location>
</feature>
<feature type="modified residue" description="Phosphothreonine" evidence="16">
    <location>
        <position position="1135"/>
    </location>
</feature>
<feature type="modified residue" description="Phosphoserine" evidence="16">
    <location>
        <position position="1227"/>
    </location>
</feature>
<feature type="modified residue" description="Phosphoserine" evidence="16 52 58">
    <location>
        <position position="1308"/>
    </location>
</feature>
<feature type="modified residue" description="Phosphoserine" evidence="16">
    <location>
        <position position="1355"/>
    </location>
</feature>
<feature type="modified residue" description="Phosphoserine" evidence="16">
    <location>
        <position position="1375"/>
    </location>
</feature>
<feature type="modified residue" description="Phosphoserine" evidence="16">
    <location>
        <position position="1481"/>
    </location>
</feature>
<feature type="modified residue" description="Phosphoserine" evidence="52 56 57 58 59">
    <location>
        <position position="1549"/>
    </location>
</feature>
<feature type="modified residue" description="Phosphothreonine" evidence="16">
    <location>
        <position position="1736"/>
    </location>
</feature>
<feature type="modified residue" description="Phosphoserine" evidence="16">
    <location>
        <position position="1741"/>
    </location>
</feature>
<feature type="modified residue" description="Phosphotyrosine" evidence="51">
    <location>
        <position position="1746"/>
    </location>
</feature>
<feature type="modified residue" description="Phosphoserine" evidence="16">
    <location>
        <position position="1780"/>
    </location>
</feature>
<feature type="modified residue" description="Phosphothreonine" evidence="16 52 53 56 58">
    <location>
        <position position="1969"/>
    </location>
</feature>
<feature type="modified residue" description="Phosphoserine" evidence="59">
    <location>
        <position position="1990"/>
    </location>
</feature>
<feature type="modified residue" description="Phosphoserine" evidence="16">
    <location>
        <position position="2026"/>
    </location>
</feature>
<feature type="modified residue" description="Phosphoserine" evidence="16">
    <location>
        <position position="2028"/>
    </location>
</feature>
<feature type="modified residue" description="Phosphothreonine" evidence="16">
    <location>
        <position position="2030"/>
    </location>
</feature>
<feature type="modified residue" description="Phosphoserine" evidence="16">
    <location>
        <position position="2076"/>
    </location>
</feature>
<feature type="modified residue" description="Phosphothreonine" evidence="16">
    <location>
        <position position="2213"/>
    </location>
</feature>
<feature type="modified residue" description="Phosphoserine" evidence="58">
    <location>
        <position position="2241"/>
    </location>
</feature>
<feature type="modified residue" description="Phosphoserine" evidence="16">
    <location>
        <position position="2289"/>
    </location>
</feature>
<feature type="modified residue" description="Phosphoserine" evidence="58">
    <location>
        <position position="2469"/>
    </location>
</feature>
<feature type="modified residue" description="Phosphoserine" evidence="16">
    <location>
        <position position="2484"/>
    </location>
</feature>
<feature type="modified residue" description="Phosphoserine" evidence="52 55 57 58">
    <location>
        <position position="2486"/>
    </location>
</feature>
<feature type="splice variant" id="VSP_054399" description="In isoform 2." evidence="32">
    <location>
        <position position="2474"/>
    </location>
</feature>
<feature type="sequence variant" id="VAR_051466" description="In dbSNP:rs1062822.">
    <original>S</original>
    <variation>R</variation>
    <location>
        <position position="2150"/>
    </location>
</feature>
<feature type="mutagenesis site" description="Abolished binding to ubiquitin, leading to strongly reduced E3 ubiquitin-protein ligase activity." evidence="11 26 27 28">
    <original>V</original>
    <variation>K</variation>
    <location>
        <position position="196"/>
    </location>
</feature>
<feature type="mutagenesis site" description="Does not affect binding to ubiquitin." evidence="11">
    <original>L</original>
    <variation>N</variation>
    <location>
        <position position="214"/>
    </location>
</feature>
<feature type="mutagenesis site" description="Does not affect binding to ubiquitin." evidence="11">
    <original>L</original>
    <variation>K</variation>
    <location>
        <position position="218"/>
    </location>
</feature>
<feature type="mutagenesis site" description="Abolished binding to ubiquitin." evidence="11 26 27">
    <original>L</original>
    <variation>K</variation>
    <location>
        <position position="224"/>
    </location>
</feature>
<feature type="mutagenesis site" description="Impaired tetramerization." evidence="27">
    <original>R</original>
    <variation>D</variation>
    <location>
        <position position="1914"/>
    </location>
</feature>
<feature type="mutagenesis site" description="Impaired tetramerization." evidence="27">
    <original>R</original>
    <variation>D</variation>
    <location>
        <position position="1926"/>
    </location>
</feature>
<feature type="mutagenesis site" description="Impaired tetramerization." evidence="27">
    <original>E</original>
    <variation>R</variation>
    <location>
        <position position="1931"/>
    </location>
</feature>
<feature type="mutagenesis site" description="Reduced but not abolished E3 ubiquitin-protein ligase activity." evidence="26">
    <original>Y</original>
    <variation>A</variation>
    <location>
        <position position="2576"/>
    </location>
</feature>
<feature type="mutagenesis site" description="Strongly reduced E3 ubiquitin-protein ligase activity." evidence="26">
    <original>F</original>
    <variation>A</variation>
    <location>
        <position position="2732"/>
    </location>
</feature>
<feature type="mutagenesis site" description="Loss of E3 ubiquitin-protein ligase activity." evidence="8 18 20 26 29 30">
    <original>C</original>
    <variation>A</variation>
    <variation>S</variation>
    <location>
        <position position="2768"/>
    </location>
</feature>
<feature type="mutagenesis site" description="Strongly reduced E3 ubiquitin-protein ligase activity." evidence="26 30">
    <original>A</original>
    <variation>W</variation>
    <location>
        <position position="2790"/>
    </location>
</feature>
<feature type="sequence conflict" description="In Ref. 2; AAF88143." evidence="34" ref="2">
    <original>S</original>
    <variation>P</variation>
    <location>
        <position position="134"/>
    </location>
</feature>
<feature type="sequence conflict" description="In Ref. 2; AAF88143." evidence="34" ref="2">
    <original>E</original>
    <variation>K</variation>
    <location>
        <position position="229"/>
    </location>
</feature>
<feature type="sequence conflict" description="In Ref. 2; AAF88143." evidence="34" ref="2">
    <original>S</original>
    <variation>Y</variation>
    <location>
        <position position="258"/>
    </location>
</feature>
<feature type="sequence conflict" description="In Ref. 2; AAF88143." evidence="34" ref="2">
    <original>IG</original>
    <variation>M</variation>
    <location>
        <begin position="374"/>
        <end position="375"/>
    </location>
</feature>
<feature type="sequence conflict" description="In Ref. 2; AAF88143." evidence="34" ref="2">
    <original>D</original>
    <variation>H</variation>
    <location>
        <position position="772"/>
    </location>
</feature>
<feature type="sequence conflict" description="In Ref. 2; AAF88143." evidence="34" ref="2">
    <original>Q</original>
    <variation>R</variation>
    <location>
        <position position="780"/>
    </location>
</feature>
<feature type="sequence conflict" description="In Ref. 2; AAF88143." evidence="34" ref="2">
    <original>D</original>
    <variation>G</variation>
    <location>
        <position position="884"/>
    </location>
</feature>
<feature type="sequence conflict" description="In Ref. 2; AAF88143." evidence="34" ref="2">
    <original>S</original>
    <variation>P</variation>
    <location>
        <position position="1811"/>
    </location>
</feature>
<feature type="sequence conflict" description="In Ref. 2; AAF88143." evidence="34" ref="2">
    <original>L</original>
    <variation>H</variation>
    <location>
        <position position="2144"/>
    </location>
</feature>
<feature type="sequence conflict" description="In Ref. 2; AAF88143." evidence="34" ref="2">
    <original>K</original>
    <variation>R</variation>
    <location>
        <position position="2282"/>
    </location>
</feature>
<feature type="sequence conflict" description="In Ref. 2; AAF88143." evidence="34" ref="2">
    <original>D</original>
    <variation>N</variation>
    <location>
        <position position="2489"/>
    </location>
</feature>
<feature type="strand" evidence="66">
    <location>
        <begin position="2"/>
        <end position="13"/>
    </location>
</feature>
<feature type="helix" evidence="66">
    <location>
        <begin position="15"/>
        <end position="30"/>
    </location>
</feature>
<feature type="helix" evidence="66">
    <location>
        <begin position="38"/>
        <end position="40"/>
    </location>
</feature>
<feature type="helix" evidence="66">
    <location>
        <begin position="41"/>
        <end position="45"/>
    </location>
</feature>
<feature type="strand" evidence="66">
    <location>
        <begin position="48"/>
        <end position="53"/>
    </location>
</feature>
<feature type="strand" evidence="66">
    <location>
        <begin position="55"/>
        <end position="62"/>
    </location>
</feature>
<feature type="turn" evidence="67">
    <location>
        <begin position="63"/>
        <end position="65"/>
    </location>
</feature>
<feature type="strand" evidence="66">
    <location>
        <begin position="67"/>
        <end position="74"/>
    </location>
</feature>
<feature type="helix" evidence="68">
    <location>
        <begin position="76"/>
        <end position="79"/>
    </location>
</feature>
<feature type="helix" evidence="61">
    <location>
        <begin position="182"/>
        <end position="184"/>
    </location>
</feature>
<feature type="helix" evidence="61">
    <location>
        <begin position="187"/>
        <end position="196"/>
    </location>
</feature>
<feature type="helix" evidence="61">
    <location>
        <begin position="202"/>
        <end position="211"/>
    </location>
</feature>
<feature type="turn" evidence="61">
    <location>
        <begin position="212"/>
        <end position="214"/>
    </location>
</feature>
<feature type="helix" evidence="61">
    <location>
        <begin position="216"/>
        <end position="224"/>
    </location>
</feature>
<feature type="strand" evidence="66">
    <location>
        <begin position="354"/>
        <end position="356"/>
    </location>
</feature>
<feature type="strand" evidence="66">
    <location>
        <begin position="373"/>
        <end position="376"/>
    </location>
</feature>
<feature type="strand" evidence="66">
    <location>
        <begin position="378"/>
        <end position="384"/>
    </location>
</feature>
<feature type="strand" evidence="65">
    <location>
        <begin position="390"/>
        <end position="392"/>
    </location>
</feature>
<feature type="strand" evidence="66">
    <location>
        <begin position="394"/>
        <end position="397"/>
    </location>
</feature>
<feature type="helix" evidence="66">
    <location>
        <begin position="414"/>
        <end position="417"/>
    </location>
</feature>
<feature type="helix" evidence="65">
    <location>
        <begin position="419"/>
        <end position="421"/>
    </location>
</feature>
<feature type="strand" evidence="66">
    <location>
        <begin position="424"/>
        <end position="429"/>
    </location>
</feature>
<feature type="strand" evidence="66">
    <location>
        <begin position="431"/>
        <end position="438"/>
    </location>
</feature>
<feature type="turn" evidence="63">
    <location>
        <begin position="439"/>
        <end position="441"/>
    </location>
</feature>
<feature type="strand" evidence="66">
    <location>
        <begin position="443"/>
        <end position="447"/>
    </location>
</feature>
<feature type="helix" evidence="64">
    <location>
        <begin position="449"/>
        <end position="451"/>
    </location>
</feature>
<feature type="turn" evidence="68">
    <location>
        <begin position="452"/>
        <end position="454"/>
    </location>
</feature>
<feature type="helix" evidence="66">
    <location>
        <begin position="455"/>
        <end position="458"/>
    </location>
</feature>
<feature type="strand" evidence="63">
    <location>
        <begin position="460"/>
        <end position="464"/>
    </location>
</feature>
<feature type="helix" evidence="64">
    <location>
        <begin position="466"/>
        <end position="468"/>
    </location>
</feature>
<feature type="strand" evidence="66">
    <location>
        <begin position="475"/>
        <end position="478"/>
    </location>
</feature>
<feature type="strand" evidence="66">
    <location>
        <begin position="480"/>
        <end position="486"/>
    </location>
</feature>
<feature type="strand" evidence="66">
    <location>
        <begin position="491"/>
        <end position="496"/>
    </location>
</feature>
<feature type="helix" evidence="66">
    <location>
        <begin position="499"/>
        <end position="507"/>
    </location>
</feature>
<feature type="helix" evidence="66">
    <location>
        <begin position="511"/>
        <end position="513"/>
    </location>
</feature>
<feature type="strand" evidence="63">
    <location>
        <begin position="533"/>
        <end position="537"/>
    </location>
</feature>
<feature type="strand" evidence="66">
    <location>
        <begin position="547"/>
        <end position="550"/>
    </location>
</feature>
<feature type="helix" evidence="66">
    <location>
        <begin position="552"/>
        <end position="554"/>
    </location>
</feature>
<feature type="strand" evidence="66">
    <location>
        <begin position="557"/>
        <end position="563"/>
    </location>
</feature>
<feature type="strand" evidence="66">
    <location>
        <begin position="565"/>
        <end position="567"/>
    </location>
</feature>
<feature type="strand" evidence="65">
    <location>
        <begin position="568"/>
        <end position="570"/>
    </location>
</feature>
<feature type="strand" evidence="66">
    <location>
        <begin position="574"/>
        <end position="576"/>
    </location>
</feature>
<feature type="helix" evidence="66">
    <location>
        <begin position="579"/>
        <end position="582"/>
    </location>
</feature>
<feature type="strand" evidence="64">
    <location>
        <begin position="649"/>
        <end position="652"/>
    </location>
</feature>
<feature type="turn" evidence="66">
    <location>
        <begin position="653"/>
        <end position="655"/>
    </location>
</feature>
<feature type="strand" evidence="64">
    <location>
        <begin position="656"/>
        <end position="660"/>
    </location>
</feature>
<feature type="strand" evidence="63">
    <location>
        <begin position="668"/>
        <end position="674"/>
    </location>
</feature>
<feature type="strand" evidence="63">
    <location>
        <begin position="677"/>
        <end position="681"/>
    </location>
</feature>
<feature type="helix" evidence="63">
    <location>
        <begin position="701"/>
        <end position="707"/>
    </location>
</feature>
<feature type="strand" evidence="63">
    <location>
        <begin position="708"/>
        <end position="712"/>
    </location>
</feature>
<feature type="helix" evidence="63">
    <location>
        <begin position="713"/>
        <end position="715"/>
    </location>
</feature>
<feature type="strand" evidence="63">
    <location>
        <begin position="716"/>
        <end position="718"/>
    </location>
</feature>
<feature type="strand" evidence="66">
    <location>
        <begin position="730"/>
        <end position="737"/>
    </location>
</feature>
<feature type="strand" evidence="63">
    <location>
        <begin position="741"/>
        <end position="743"/>
    </location>
</feature>
<feature type="strand" evidence="66">
    <location>
        <begin position="745"/>
        <end position="752"/>
    </location>
</feature>
<feature type="strand" evidence="66">
    <location>
        <begin position="755"/>
        <end position="762"/>
    </location>
</feature>
<feature type="strand" evidence="66">
    <location>
        <begin position="765"/>
        <end position="771"/>
    </location>
</feature>
<feature type="turn" evidence="66">
    <location>
        <begin position="773"/>
        <end position="775"/>
    </location>
</feature>
<feature type="strand" evidence="66">
    <location>
        <begin position="777"/>
        <end position="783"/>
    </location>
</feature>
<feature type="helix" evidence="66">
    <location>
        <begin position="788"/>
        <end position="792"/>
    </location>
</feature>
<feature type="helix" evidence="66">
    <location>
        <begin position="796"/>
        <end position="798"/>
    </location>
</feature>
<feature type="strand" evidence="66">
    <location>
        <begin position="800"/>
        <end position="802"/>
    </location>
</feature>
<feature type="strand" evidence="66">
    <location>
        <begin position="805"/>
        <end position="807"/>
    </location>
</feature>
<feature type="strand" evidence="66">
    <location>
        <begin position="811"/>
        <end position="813"/>
    </location>
</feature>
<feature type="strand" evidence="66">
    <location>
        <begin position="817"/>
        <end position="820"/>
    </location>
</feature>
<feature type="strand" evidence="66">
    <location>
        <begin position="826"/>
        <end position="830"/>
    </location>
</feature>
<feature type="strand" evidence="66">
    <location>
        <begin position="841"/>
        <end position="850"/>
    </location>
</feature>
<feature type="strand" evidence="66">
    <location>
        <begin position="862"/>
        <end position="872"/>
    </location>
</feature>
<feature type="helix" evidence="66">
    <location>
        <begin position="875"/>
        <end position="881"/>
    </location>
</feature>
<feature type="helix" evidence="66">
    <location>
        <begin position="885"/>
        <end position="901"/>
    </location>
</feature>
<feature type="helix" evidence="66">
    <location>
        <begin position="905"/>
        <end position="912"/>
    </location>
</feature>
<feature type="turn" evidence="66">
    <location>
        <begin position="917"/>
        <end position="919"/>
    </location>
</feature>
<feature type="helix" evidence="66">
    <location>
        <begin position="922"/>
        <end position="929"/>
    </location>
</feature>
<feature type="helix" evidence="64">
    <location>
        <begin position="936"/>
        <end position="941"/>
    </location>
</feature>
<feature type="turn" evidence="64">
    <location>
        <begin position="942"/>
        <end position="944"/>
    </location>
</feature>
<feature type="helix" evidence="66">
    <location>
        <begin position="1078"/>
        <end position="1094"/>
    </location>
</feature>
<feature type="turn" evidence="63">
    <location>
        <begin position="1096"/>
        <end position="1098"/>
    </location>
</feature>
<feature type="helix" evidence="66">
    <location>
        <begin position="1099"/>
        <end position="1107"/>
    </location>
</feature>
<feature type="helix" evidence="66">
    <location>
        <begin position="1116"/>
        <end position="1122"/>
    </location>
</feature>
<feature type="helix" evidence="66">
    <location>
        <begin position="1126"/>
        <end position="1141"/>
    </location>
</feature>
<feature type="strand" evidence="64">
    <location>
        <begin position="1145"/>
        <end position="1148"/>
    </location>
</feature>
<feature type="helix" evidence="66">
    <location>
        <begin position="1150"/>
        <end position="1158"/>
    </location>
</feature>
<feature type="helix" evidence="66">
    <location>
        <begin position="1165"/>
        <end position="1167"/>
    </location>
</feature>
<feature type="helix" evidence="66">
    <location>
        <begin position="1169"/>
        <end position="1175"/>
    </location>
</feature>
<feature type="helix" evidence="66">
    <location>
        <begin position="1181"/>
        <end position="1184"/>
    </location>
</feature>
<feature type="strand" evidence="66">
    <location>
        <begin position="1193"/>
        <end position="1196"/>
    </location>
</feature>
<feature type="turn" evidence="66">
    <location>
        <begin position="1197"/>
        <end position="1200"/>
    </location>
</feature>
<feature type="turn" evidence="66">
    <location>
        <begin position="1209"/>
        <end position="1216"/>
    </location>
</feature>
<feature type="strand" evidence="66">
    <location>
        <begin position="1217"/>
        <end position="1219"/>
    </location>
</feature>
<feature type="strand" evidence="66">
    <location>
        <begin position="1221"/>
        <end position="1223"/>
    </location>
</feature>
<feature type="strand" evidence="68">
    <location>
        <begin position="1228"/>
        <end position="1230"/>
    </location>
</feature>
<feature type="helix" evidence="66">
    <location>
        <begin position="1234"/>
        <end position="1236"/>
    </location>
</feature>
<feature type="strand" evidence="66">
    <location>
        <begin position="1241"/>
        <end position="1244"/>
    </location>
</feature>
<feature type="helix" evidence="66">
    <location>
        <begin position="1248"/>
        <end position="1261"/>
    </location>
</feature>
<feature type="helix" evidence="66">
    <location>
        <begin position="1264"/>
        <end position="1266"/>
    </location>
</feature>
<feature type="strand" evidence="63">
    <location>
        <begin position="1270"/>
        <end position="1272"/>
    </location>
</feature>
<feature type="helix" evidence="66">
    <location>
        <begin position="1275"/>
        <end position="1290"/>
    </location>
</feature>
<feature type="helix" evidence="66">
    <location>
        <begin position="1324"/>
        <end position="1333"/>
    </location>
</feature>
<feature type="helix" evidence="66">
    <location>
        <begin position="1336"/>
        <end position="1343"/>
    </location>
</feature>
<feature type="turn" evidence="66">
    <location>
        <begin position="1344"/>
        <end position="1346"/>
    </location>
</feature>
<feature type="strand" evidence="66">
    <location>
        <begin position="1347"/>
        <end position="1349"/>
    </location>
</feature>
<feature type="strand" evidence="63">
    <location>
        <begin position="1350"/>
        <end position="1352"/>
    </location>
</feature>
<feature type="strand" evidence="66">
    <location>
        <begin position="1353"/>
        <end position="1355"/>
    </location>
</feature>
<feature type="helix" evidence="63">
    <location>
        <begin position="1359"/>
        <end position="1361"/>
    </location>
</feature>
<feature type="helix" evidence="66">
    <location>
        <begin position="1365"/>
        <end position="1373"/>
    </location>
</feature>
<feature type="helix" evidence="66">
    <location>
        <begin position="1378"/>
        <end position="1388"/>
    </location>
</feature>
<feature type="helix" evidence="66">
    <location>
        <begin position="1396"/>
        <end position="1409"/>
    </location>
</feature>
<feature type="helix" evidence="66">
    <location>
        <begin position="1417"/>
        <end position="1442"/>
    </location>
</feature>
<feature type="helix" evidence="66">
    <location>
        <begin position="1448"/>
        <end position="1450"/>
    </location>
</feature>
<feature type="helix" evidence="66">
    <location>
        <begin position="1455"/>
        <end position="1466"/>
    </location>
</feature>
<feature type="helix" evidence="66">
    <location>
        <begin position="1468"/>
        <end position="1488"/>
    </location>
</feature>
<feature type="strand" evidence="66">
    <location>
        <begin position="1500"/>
        <end position="1502"/>
    </location>
</feature>
<feature type="helix" evidence="66">
    <location>
        <begin position="1503"/>
        <end position="1514"/>
    </location>
</feature>
<feature type="turn" evidence="65">
    <location>
        <begin position="1703"/>
        <end position="1706"/>
    </location>
</feature>
<feature type="helix" evidence="64">
    <location>
        <begin position="1707"/>
        <end position="1709"/>
    </location>
</feature>
<feature type="helix" evidence="66">
    <location>
        <begin position="1712"/>
        <end position="1717"/>
    </location>
</feature>
<feature type="helix" evidence="66">
    <location>
        <begin position="1777"/>
        <end position="1801"/>
    </location>
</feature>
<feature type="helix" evidence="65">
    <location>
        <begin position="1802"/>
        <end position="1804"/>
    </location>
</feature>
<feature type="helix" evidence="66">
    <location>
        <begin position="1805"/>
        <end position="1808"/>
    </location>
</feature>
<feature type="turn" evidence="66">
    <location>
        <begin position="1809"/>
        <end position="1812"/>
    </location>
</feature>
<feature type="strand" evidence="66">
    <location>
        <begin position="1813"/>
        <end position="1815"/>
    </location>
</feature>
<feature type="helix" evidence="66">
    <location>
        <begin position="1821"/>
        <end position="1862"/>
    </location>
</feature>
<feature type="strand" evidence="63">
    <location>
        <begin position="1867"/>
        <end position="1869"/>
    </location>
</feature>
<feature type="strand" evidence="66">
    <location>
        <begin position="1871"/>
        <end position="1873"/>
    </location>
</feature>
<feature type="helix" evidence="66">
    <location>
        <begin position="1874"/>
        <end position="1876"/>
    </location>
</feature>
<feature type="strand" evidence="66">
    <location>
        <begin position="1877"/>
        <end position="1879"/>
    </location>
</feature>
<feature type="helix" evidence="66">
    <location>
        <begin position="1913"/>
        <end position="1927"/>
    </location>
</feature>
<feature type="turn" evidence="66">
    <location>
        <begin position="1928"/>
        <end position="1930"/>
    </location>
</feature>
<feature type="strand" evidence="66">
    <location>
        <begin position="1933"/>
        <end position="1935"/>
    </location>
</feature>
<feature type="helix" evidence="66">
    <location>
        <begin position="1941"/>
        <end position="1943"/>
    </location>
</feature>
<feature type="helix" evidence="66">
    <location>
        <begin position="1945"/>
        <end position="1965"/>
    </location>
</feature>
<feature type="strand" evidence="66">
    <location>
        <begin position="2017"/>
        <end position="2019"/>
    </location>
</feature>
<feature type="helix" evidence="66">
    <location>
        <begin position="2021"/>
        <end position="2023"/>
    </location>
</feature>
<feature type="turn" evidence="66">
    <location>
        <begin position="2027"/>
        <end position="2029"/>
    </location>
</feature>
<feature type="turn" evidence="66">
    <location>
        <begin position="2039"/>
        <end position="2041"/>
    </location>
</feature>
<feature type="helix" evidence="66">
    <location>
        <begin position="2044"/>
        <end position="2047"/>
    </location>
</feature>
<feature type="helix" evidence="66">
    <location>
        <begin position="2049"/>
        <end position="2052"/>
    </location>
</feature>
<feature type="helix" evidence="66">
    <location>
        <begin position="2054"/>
        <end position="2056"/>
    </location>
</feature>
<feature type="helix" evidence="66">
    <location>
        <begin position="2063"/>
        <end position="2066"/>
    </location>
</feature>
<feature type="strand" evidence="66">
    <location>
        <begin position="2081"/>
        <end position="2085"/>
    </location>
</feature>
<feature type="helix" evidence="66">
    <location>
        <begin position="2094"/>
        <end position="2101"/>
    </location>
</feature>
<feature type="helix" evidence="64">
    <location>
        <begin position="2104"/>
        <end position="2115"/>
    </location>
</feature>
<feature type="helix" evidence="66">
    <location>
        <begin position="2166"/>
        <end position="2168"/>
    </location>
</feature>
<feature type="turn" evidence="66">
    <location>
        <begin position="2175"/>
        <end position="2177"/>
    </location>
</feature>
<feature type="helix" evidence="66">
    <location>
        <begin position="2182"/>
        <end position="2188"/>
    </location>
</feature>
<feature type="helix" evidence="66">
    <location>
        <begin position="2190"/>
        <end position="2199"/>
    </location>
</feature>
<feature type="turn" evidence="64">
    <location>
        <begin position="2201"/>
        <end position="2203"/>
    </location>
</feature>
<feature type="helix" evidence="66">
    <location>
        <begin position="2204"/>
        <end position="2206"/>
    </location>
</feature>
<feature type="helix" evidence="66">
    <location>
        <begin position="2211"/>
        <end position="2214"/>
    </location>
</feature>
<feature type="helix" evidence="66">
    <location>
        <begin position="2218"/>
        <end position="2233"/>
    </location>
</feature>
<feature type="strand" evidence="66">
    <location>
        <begin position="2242"/>
        <end position="2244"/>
    </location>
</feature>
<feature type="strand" evidence="66">
    <location>
        <begin position="2246"/>
        <end position="2248"/>
    </location>
</feature>
<feature type="helix" evidence="66">
    <location>
        <begin position="2249"/>
        <end position="2262"/>
    </location>
</feature>
<feature type="strand" evidence="66">
    <location>
        <begin position="2265"/>
        <end position="2267"/>
    </location>
</feature>
<feature type="strand" evidence="65">
    <location>
        <begin position="2268"/>
        <end position="2270"/>
    </location>
</feature>
<feature type="strand" evidence="66">
    <location>
        <begin position="2279"/>
        <end position="2281"/>
    </location>
</feature>
<feature type="helix" evidence="66">
    <location>
        <begin position="2289"/>
        <end position="2303"/>
    </location>
</feature>
<feature type="strand" evidence="67">
    <location>
        <begin position="2305"/>
        <end position="2307"/>
    </location>
</feature>
<feature type="helix" evidence="68">
    <location>
        <begin position="2312"/>
        <end position="2316"/>
    </location>
</feature>
<feature type="helix" evidence="60">
    <location>
        <begin position="2394"/>
        <end position="2408"/>
    </location>
</feature>
<feature type="helix" evidence="60">
    <location>
        <begin position="2410"/>
        <end position="2412"/>
    </location>
</feature>
<feature type="helix" evidence="60">
    <location>
        <begin position="2413"/>
        <end position="2420"/>
    </location>
</feature>
<feature type="helix" evidence="60">
    <location>
        <begin position="2425"/>
        <end position="2433"/>
    </location>
</feature>
<feature type="helix" evidence="60">
    <location>
        <begin position="2435"/>
        <end position="2452"/>
    </location>
</feature>
<feature type="strand" evidence="66">
    <location>
        <begin position="2504"/>
        <end position="2506"/>
    </location>
</feature>
<feature type="strand" evidence="66">
    <location>
        <begin position="2508"/>
        <end position="2510"/>
    </location>
</feature>
<feature type="strand" evidence="66">
    <location>
        <begin position="2514"/>
        <end position="2516"/>
    </location>
</feature>
<feature type="helix" evidence="66">
    <location>
        <begin position="2523"/>
        <end position="2541"/>
    </location>
</feature>
<feature type="helix" evidence="66">
    <location>
        <begin position="2552"/>
        <end position="2559"/>
    </location>
</feature>
<feature type="helix" evidence="66">
    <location>
        <begin position="2565"/>
        <end position="2567"/>
    </location>
</feature>
<feature type="helix" evidence="66">
    <location>
        <begin position="2568"/>
        <end position="2571"/>
    </location>
</feature>
<feature type="helix" evidence="66">
    <location>
        <begin position="2573"/>
        <end position="2587"/>
    </location>
</feature>
<feature type="strand" evidence="66">
    <location>
        <begin position="2588"/>
        <end position="2590"/>
    </location>
</feature>
<feature type="helix" evidence="66">
    <location>
        <begin position="2592"/>
        <end position="2598"/>
    </location>
</feature>
<feature type="strand" evidence="66">
    <location>
        <begin position="2601"/>
        <end position="2605"/>
    </location>
</feature>
<feature type="turn" evidence="66">
    <location>
        <begin position="2608"/>
        <end position="2611"/>
    </location>
</feature>
<feature type="strand" evidence="66">
    <location>
        <begin position="2613"/>
        <end position="2618"/>
    </location>
</feature>
<feature type="strand" evidence="66">
    <location>
        <begin position="2622"/>
        <end position="2625"/>
    </location>
</feature>
<feature type="helix" evidence="66">
    <location>
        <begin position="2628"/>
        <end position="2630"/>
    </location>
</feature>
<feature type="helix" evidence="66">
    <location>
        <begin position="2631"/>
        <end position="2641"/>
    </location>
</feature>
<feature type="turn" evidence="64">
    <location>
        <begin position="2645"/>
        <end position="2647"/>
    </location>
</feature>
<feature type="helix" evidence="66">
    <location>
        <begin position="2648"/>
        <end position="2659"/>
    </location>
</feature>
<feature type="helix" evidence="66">
    <location>
        <begin position="2664"/>
        <end position="2667"/>
    </location>
</feature>
<feature type="helix" evidence="66">
    <location>
        <begin position="2672"/>
        <end position="2679"/>
    </location>
</feature>
<feature type="strand" evidence="63">
    <location>
        <begin position="2682"/>
        <end position="2684"/>
    </location>
</feature>
<feature type="helix" evidence="62">
    <location>
        <begin position="2687"/>
        <end position="2692"/>
    </location>
</feature>
<feature type="strand" evidence="62">
    <location>
        <begin position="2695"/>
        <end position="2698"/>
    </location>
</feature>
<feature type="helix" evidence="62">
    <location>
        <begin position="2704"/>
        <end position="2720"/>
    </location>
</feature>
<feature type="helix" evidence="62">
    <location>
        <begin position="2723"/>
        <end position="2734"/>
    </location>
</feature>
<feature type="strand" evidence="66">
    <location>
        <begin position="2735"/>
        <end position="2738"/>
    </location>
</feature>
<feature type="strand" evidence="66">
    <location>
        <begin position="2741"/>
        <end position="2743"/>
    </location>
</feature>
<feature type="strand" evidence="67">
    <location>
        <begin position="2746"/>
        <end position="2748"/>
    </location>
</feature>
<feature type="strand" evidence="62">
    <location>
        <begin position="2751"/>
        <end position="2756"/>
    </location>
</feature>
<feature type="strand" evidence="68">
    <location>
        <begin position="2759"/>
        <end position="2761"/>
    </location>
</feature>
<feature type="strand" evidence="62">
    <location>
        <begin position="2764"/>
        <end position="2766"/>
    </location>
</feature>
<feature type="turn" evidence="62">
    <location>
        <begin position="2767"/>
        <end position="2770"/>
    </location>
</feature>
<feature type="strand" evidence="62">
    <location>
        <begin position="2771"/>
        <end position="2775"/>
    </location>
</feature>
<feature type="helix" evidence="62">
    <location>
        <begin position="2780"/>
        <end position="2791"/>
    </location>
</feature>